<proteinExistence type="evidence at protein level"/>
<gene>
    <name type="primary">FOXC1</name>
    <name type="synonym">FKHL7</name>
    <name type="synonym">FREAC3</name>
</gene>
<evidence type="ECO:0000250" key="1">
    <source>
        <dbReference type="UniProtKB" id="Q61572"/>
    </source>
</evidence>
<evidence type="ECO:0000255" key="2">
    <source>
        <dbReference type="PROSITE-ProRule" id="PRU00089"/>
    </source>
</evidence>
<evidence type="ECO:0000256" key="3">
    <source>
        <dbReference type="SAM" id="MobiDB-lite"/>
    </source>
</evidence>
<evidence type="ECO:0000269" key="4">
    <source>
    </source>
</evidence>
<evidence type="ECO:0000269" key="5">
    <source>
    </source>
</evidence>
<evidence type="ECO:0000269" key="6">
    <source>
    </source>
</evidence>
<evidence type="ECO:0000269" key="7">
    <source>
    </source>
</evidence>
<evidence type="ECO:0000269" key="8">
    <source>
    </source>
</evidence>
<evidence type="ECO:0000269" key="9">
    <source>
    </source>
</evidence>
<evidence type="ECO:0000269" key="10">
    <source>
    </source>
</evidence>
<evidence type="ECO:0000269" key="11">
    <source>
    </source>
</evidence>
<evidence type="ECO:0000269" key="12">
    <source>
    </source>
</evidence>
<evidence type="ECO:0000269" key="13">
    <source>
    </source>
</evidence>
<evidence type="ECO:0000269" key="14">
    <source>
    </source>
</evidence>
<evidence type="ECO:0000269" key="15">
    <source>
    </source>
</evidence>
<evidence type="ECO:0000269" key="16">
    <source>
    </source>
</evidence>
<evidence type="ECO:0000269" key="17">
    <source>
    </source>
</evidence>
<evidence type="ECO:0000269" key="18">
    <source>
    </source>
</evidence>
<evidence type="ECO:0000269" key="19">
    <source>
    </source>
</evidence>
<evidence type="ECO:0000269" key="20">
    <source>
    </source>
</evidence>
<evidence type="ECO:0000269" key="21">
    <source>
    </source>
</evidence>
<evidence type="ECO:0000269" key="22">
    <source>
    </source>
</evidence>
<evidence type="ECO:0000269" key="23">
    <source>
    </source>
</evidence>
<evidence type="ECO:0000269" key="24">
    <source>
    </source>
</evidence>
<evidence type="ECO:0000269" key="25">
    <source>
    </source>
</evidence>
<evidence type="ECO:0000269" key="26">
    <source>
    </source>
</evidence>
<evidence type="ECO:0000269" key="27">
    <source>
    </source>
</evidence>
<evidence type="ECO:0000269" key="28">
    <source>
    </source>
</evidence>
<evidence type="ECO:0000269" key="29">
    <source>
    </source>
</evidence>
<evidence type="ECO:0000269" key="30">
    <source>
    </source>
</evidence>
<evidence type="ECO:0000269" key="31">
    <source>
    </source>
</evidence>
<evidence type="ECO:0000269" key="32">
    <source>
    </source>
</evidence>
<evidence type="ECO:0000269" key="33">
    <source>
    </source>
</evidence>
<evidence type="ECO:0000269" key="34">
    <source>
    </source>
</evidence>
<evidence type="ECO:0000269" key="35">
    <source>
    </source>
</evidence>
<evidence type="ECO:0000269" key="36">
    <source>
    </source>
</evidence>
<evidence type="ECO:0000269" key="37">
    <source>
    </source>
</evidence>
<evidence type="ECO:0000269" key="38">
    <source>
    </source>
</evidence>
<evidence type="ECO:0000269" key="39">
    <source>
    </source>
</evidence>
<evidence type="ECO:0000269" key="40">
    <source>
    </source>
</evidence>
<evidence type="ECO:0000269" key="41">
    <source>
    </source>
</evidence>
<evidence type="ECO:0000269" key="42">
    <source>
    </source>
</evidence>
<evidence type="ECO:0000269" key="43">
    <source>
    </source>
</evidence>
<evidence type="ECO:0000305" key="44"/>
<evidence type="ECO:0007744" key="45">
    <source>
    </source>
</evidence>
<evidence type="ECO:0007744" key="46">
    <source>
    </source>
</evidence>
<evidence type="ECO:0007744" key="47">
    <source>
    </source>
</evidence>
<evidence type="ECO:0007744" key="48">
    <source>
    </source>
</evidence>
<reference key="1">
    <citation type="journal article" date="1998" name="Nat. Genet.">
        <title>The forkhead transcription factor gene FKHL7 is responsible for glaucoma phenotypes which map to 6p25.</title>
        <authorList>
            <person name="Nishimura D.Y."/>
            <person name="Swiderski R.E."/>
            <person name="Alward W.L.M."/>
            <person name="Searby C.C."/>
            <person name="Patil S.R."/>
            <person name="Bennet S.R."/>
            <person name="Kanis A.B."/>
            <person name="Gastier J.M."/>
            <person name="Stone E.M."/>
            <person name="Sheffield V.C."/>
        </authorList>
    </citation>
    <scope>NUCLEOTIDE SEQUENCE [GENOMIC DNA]</scope>
    <scope>VARIANTS ASGD3 SER-112; MET-126 AND LEU-131</scope>
    <scope>INVOLVEMENT IN ASGD3</scope>
</reference>
<reference key="2">
    <citation type="journal article" date="1998" name="Am. J. Hum. Genet.">
        <title>Mutations of the forkhead/winged-helix gene, FKHL7, in patients with Axenfeld-Rieger anomaly.</title>
        <authorList>
            <person name="Mears A.J."/>
            <person name="Jordan T."/>
            <person name="Mirzayans F."/>
            <person name="Dubois S."/>
            <person name="Kume T."/>
            <person name="Parlee M."/>
            <person name="Ritch R."/>
            <person name="Koop B."/>
            <person name="Kuo W.-L."/>
            <person name="Collins C."/>
            <person name="Marshall J."/>
            <person name="Gould D.B."/>
            <person name="Pearce W."/>
            <person name="Carlsson P."/>
            <person name="Enerbaeck S."/>
            <person name="Morissette J."/>
            <person name="Bhattacharya S."/>
            <person name="Hogan B."/>
            <person name="Raymond V."/>
            <person name="Walter M.A."/>
        </authorList>
    </citation>
    <scope>NUCLEOTIDE SEQUENCE [GENOMIC DNA]</scope>
    <scope>VARIANTS RIEG3 THR-82 AND MET-87</scope>
    <scope>INVOLVEMENT IN RIEG3</scope>
</reference>
<reference key="3">
    <citation type="journal article" date="2003" name="Mol. Vis.">
        <title>Mutation spectrum of FOXC1 and clinical genetic heterogeneity of Axenfeld-Rieger anomaly in India.</title>
        <authorList>
            <person name="Komatireddy S."/>
            <person name="Chakrabarti S."/>
            <person name="Mandal A.K."/>
            <person name="Reddy A.B.M."/>
            <person name="Sampath S."/>
            <person name="Panicker S.G."/>
            <person name="Balasubramanian D."/>
        </authorList>
    </citation>
    <scope>NUCLEOTIDE SEQUENCE [GENOMIC DNA]</scope>
    <scope>VARIANT RIEG3 LYS-161</scope>
</reference>
<reference key="4">
    <citation type="journal article" date="2003" name="Nature">
        <title>The DNA sequence and analysis of human chromosome 6.</title>
        <authorList>
            <person name="Mungall A.J."/>
            <person name="Palmer S.A."/>
            <person name="Sims S.K."/>
            <person name="Edwards C.A."/>
            <person name="Ashurst J.L."/>
            <person name="Wilming L."/>
            <person name="Jones M.C."/>
            <person name="Horton R."/>
            <person name="Hunt S.E."/>
            <person name="Scott C.E."/>
            <person name="Gilbert J.G.R."/>
            <person name="Clamp M.E."/>
            <person name="Bethel G."/>
            <person name="Milne S."/>
            <person name="Ainscough R."/>
            <person name="Almeida J.P."/>
            <person name="Ambrose K.D."/>
            <person name="Andrews T.D."/>
            <person name="Ashwell R.I.S."/>
            <person name="Babbage A.K."/>
            <person name="Bagguley C.L."/>
            <person name="Bailey J."/>
            <person name="Banerjee R."/>
            <person name="Barker D.J."/>
            <person name="Barlow K.F."/>
            <person name="Bates K."/>
            <person name="Beare D.M."/>
            <person name="Beasley H."/>
            <person name="Beasley O."/>
            <person name="Bird C.P."/>
            <person name="Blakey S.E."/>
            <person name="Bray-Allen S."/>
            <person name="Brook J."/>
            <person name="Brown A.J."/>
            <person name="Brown J.Y."/>
            <person name="Burford D.C."/>
            <person name="Burrill W."/>
            <person name="Burton J."/>
            <person name="Carder C."/>
            <person name="Carter N.P."/>
            <person name="Chapman J.C."/>
            <person name="Clark S.Y."/>
            <person name="Clark G."/>
            <person name="Clee C.M."/>
            <person name="Clegg S."/>
            <person name="Cobley V."/>
            <person name="Collier R.E."/>
            <person name="Collins J.E."/>
            <person name="Colman L.K."/>
            <person name="Corby N.R."/>
            <person name="Coville G.J."/>
            <person name="Culley K.M."/>
            <person name="Dhami P."/>
            <person name="Davies J."/>
            <person name="Dunn M."/>
            <person name="Earthrowl M.E."/>
            <person name="Ellington A.E."/>
            <person name="Evans K.A."/>
            <person name="Faulkner L."/>
            <person name="Francis M.D."/>
            <person name="Frankish A."/>
            <person name="Frankland J."/>
            <person name="French L."/>
            <person name="Garner P."/>
            <person name="Garnett J."/>
            <person name="Ghori M.J."/>
            <person name="Gilby L.M."/>
            <person name="Gillson C.J."/>
            <person name="Glithero R.J."/>
            <person name="Grafham D.V."/>
            <person name="Grant M."/>
            <person name="Gribble S."/>
            <person name="Griffiths C."/>
            <person name="Griffiths M.N.D."/>
            <person name="Hall R."/>
            <person name="Halls K.S."/>
            <person name="Hammond S."/>
            <person name="Harley J.L."/>
            <person name="Hart E.A."/>
            <person name="Heath P.D."/>
            <person name="Heathcott R."/>
            <person name="Holmes S.J."/>
            <person name="Howden P.J."/>
            <person name="Howe K.L."/>
            <person name="Howell G.R."/>
            <person name="Huckle E."/>
            <person name="Humphray S.J."/>
            <person name="Humphries M.D."/>
            <person name="Hunt A.R."/>
            <person name="Johnson C.M."/>
            <person name="Joy A.A."/>
            <person name="Kay M."/>
            <person name="Keenan S.J."/>
            <person name="Kimberley A.M."/>
            <person name="King A."/>
            <person name="Laird G.K."/>
            <person name="Langford C."/>
            <person name="Lawlor S."/>
            <person name="Leongamornlert D.A."/>
            <person name="Leversha M."/>
            <person name="Lloyd C.R."/>
            <person name="Lloyd D.M."/>
            <person name="Loveland J.E."/>
            <person name="Lovell J."/>
            <person name="Martin S."/>
            <person name="Mashreghi-Mohammadi M."/>
            <person name="Maslen G.L."/>
            <person name="Matthews L."/>
            <person name="McCann O.T."/>
            <person name="McLaren S.J."/>
            <person name="McLay K."/>
            <person name="McMurray A."/>
            <person name="Moore M.J.F."/>
            <person name="Mullikin J.C."/>
            <person name="Niblett D."/>
            <person name="Nickerson T."/>
            <person name="Novik K.L."/>
            <person name="Oliver K."/>
            <person name="Overton-Larty E.K."/>
            <person name="Parker A."/>
            <person name="Patel R."/>
            <person name="Pearce A.V."/>
            <person name="Peck A.I."/>
            <person name="Phillimore B.J.C.T."/>
            <person name="Phillips S."/>
            <person name="Plumb R.W."/>
            <person name="Porter K.M."/>
            <person name="Ramsey Y."/>
            <person name="Ranby S.A."/>
            <person name="Rice C.M."/>
            <person name="Ross M.T."/>
            <person name="Searle S.M."/>
            <person name="Sehra H.K."/>
            <person name="Sheridan E."/>
            <person name="Skuce C.D."/>
            <person name="Smith S."/>
            <person name="Smith M."/>
            <person name="Spraggon L."/>
            <person name="Squares S.L."/>
            <person name="Steward C.A."/>
            <person name="Sycamore N."/>
            <person name="Tamlyn-Hall G."/>
            <person name="Tester J."/>
            <person name="Theaker A.J."/>
            <person name="Thomas D.W."/>
            <person name="Thorpe A."/>
            <person name="Tracey A."/>
            <person name="Tromans A."/>
            <person name="Tubby B."/>
            <person name="Wall M."/>
            <person name="Wallis J.M."/>
            <person name="West A.P."/>
            <person name="White S.S."/>
            <person name="Whitehead S.L."/>
            <person name="Whittaker H."/>
            <person name="Wild A."/>
            <person name="Willey D.J."/>
            <person name="Wilmer T.E."/>
            <person name="Wood J.M."/>
            <person name="Wray P.W."/>
            <person name="Wyatt J.C."/>
            <person name="Young L."/>
            <person name="Younger R.M."/>
            <person name="Bentley D.R."/>
            <person name="Coulson A."/>
            <person name="Durbin R.M."/>
            <person name="Hubbard T."/>
            <person name="Sulston J.E."/>
            <person name="Dunham I."/>
            <person name="Rogers J."/>
            <person name="Beck S."/>
        </authorList>
    </citation>
    <scope>NUCLEOTIDE SEQUENCE [LARGE SCALE GENOMIC DNA]</scope>
</reference>
<reference key="5">
    <citation type="journal article" date="1993" name="Blood">
        <title>Drosophila forkhead homologues are expressed in a lineage-restricted manner in human hematopoietic cells.</title>
        <authorList>
            <person name="Hromas R."/>
            <person name="Moore J."/>
            <person name="Johnston T."/>
            <person name="Socha C."/>
            <person name="Klemsz M."/>
        </authorList>
    </citation>
    <scope>NUCLEOTIDE SEQUENCE [MRNA] OF 68-177</scope>
    <scope>TISSUE SPECIFICITY</scope>
    <source>
        <tissue>Erythroleukemia</tissue>
    </source>
</reference>
<reference key="6">
    <citation type="journal article" date="1994" name="EMBO J.">
        <title>Cloning and characterization of seven human forkhead proteins: binding site specificity and DNA bending.</title>
        <authorList>
            <person name="Pierrou S."/>
            <person name="Hellqvist M."/>
            <person name="Samuelsson L."/>
            <person name="Enerbaeck S."/>
            <person name="Carlsson P."/>
        </authorList>
    </citation>
    <scope>NUCLEOTIDE SEQUENCE [MRNA] OF 73-178</scope>
    <scope>FUNCTION</scope>
    <scope>DNA-BENDING</scope>
</reference>
<reference key="7">
    <citation type="journal article" date="2002" name="Genomics">
        <title>Identification of FOXC1 as a TGF-beta1 responsive gene and its involvement in negative regulation of cell growth.</title>
        <authorList>
            <person name="Zhou Y."/>
            <person name="Kato H."/>
            <person name="Asanoma K."/>
            <person name="Kondo H."/>
            <person name="Arima T."/>
            <person name="Kato K."/>
            <person name="Matsuda T."/>
            <person name="Wake N."/>
        </authorList>
    </citation>
    <scope>FUNCTION</scope>
    <scope>INDUCTION</scope>
</reference>
<reference key="8">
    <citation type="journal article" date="2002" name="J. Biol. Chem.">
        <title>FOXC1 transcriptional regulation is mediated by N- and C-terminal activation domains and contains a phosphorylated transcriptional inhibitory domain.</title>
        <authorList>
            <person name="Berry F.B."/>
            <person name="Saleem R.A."/>
            <person name="Walter M.A."/>
        </authorList>
    </citation>
    <scope>FUNCTION</scope>
    <scope>SUBCELLULAR LOCATION</scope>
    <scope>NUCLEAR LOCALIZATION SIGNAL</scope>
    <scope>TRANSCRIPTIONAL ACTIVATION/REPRESSION DOMAINS</scope>
    <scope>PHOSPHORYLATION</scope>
</reference>
<reference key="9">
    <citation type="journal article" date="2003" name="Genes Dev.">
        <title>Tbx1 is regulated by tissue-specific forkhead proteins through a common Sonic hedgehog-responsive enhancer.</title>
        <authorList>
            <person name="Yamagishi H."/>
            <person name="Maeda J."/>
            <person name="Hu T."/>
            <person name="McAnally J."/>
            <person name="Conway S.J."/>
            <person name="Kume T."/>
            <person name="Meyers E.N."/>
            <person name="Yamagishi C."/>
            <person name="Srivastava D."/>
        </authorList>
    </citation>
    <scope>FUNCTION</scope>
    <scope>DNA-BINDING</scope>
</reference>
<reference key="10">
    <citation type="journal article" date="2004" name="Nucleic Acids Res.">
        <title>Essential structural and functional determinants within the forkhead domain of FOXC1.</title>
        <authorList>
            <person name="Saleem R.A."/>
            <person name="Banerjee-Basu S."/>
            <person name="Murphy T.C."/>
            <person name="Baxevanis A."/>
            <person name="Walter M.A."/>
        </authorList>
    </citation>
    <scope>FUNCTION</scope>
    <scope>SUBCELLULAR LOCATION</scope>
    <scope>MUTAGENESIS OF PRO-79; LEU-86; ILE-87; ILE-91; ILE-126 AND ARG-127</scope>
</reference>
<reference key="11">
    <citation type="journal article" date="2005" name="Mol. Cell. Biol.">
        <title>FOXC1 transcriptional regulatory activity is impaired by PBX1 in a filamin A-mediated manner.</title>
        <authorList>
            <person name="Berry F.B."/>
            <person name="O'Neill M.A."/>
            <person name="Coca-Prados M."/>
            <person name="Walter M.A."/>
        </authorList>
    </citation>
    <scope>FUNCTION</scope>
    <scope>DNA-BINDING</scope>
    <scope>INTERACTION WITH FLNA AND PBX1</scope>
    <scope>SUBCELLULAR LOCATION</scope>
</reference>
<reference key="12">
    <citation type="journal article" date="2006" name="J. Biol. Chem.">
        <title>Regulation of FOXC1 stability and transcriptional activity by an epidermal growth factor-activated mitogen-activated protein kinase signaling cascade.</title>
        <authorList>
            <person name="Berry F.B."/>
            <person name="Mirzayans F."/>
            <person name="Walter M.A."/>
        </authorList>
    </citation>
    <scope>FUNCTION</scope>
    <scope>UBIQUITINATION</scope>
    <scope>PHOSPHORYLATION AT SER-272</scope>
    <scope>MUTAGENESIS OF THR-68; SER-241; SER-259 AND SER-272</scope>
</reference>
<reference key="13">
    <citation type="journal article" date="2008" name="Hum. Mol. Genet.">
        <title>FOXC1 is required for cell viability and resistance to oxidative stress in the eye through the transcriptional regulation of FOXO1A.</title>
        <authorList>
            <person name="Berry F.B."/>
            <person name="Skarie J.M."/>
            <person name="Mirzayans F."/>
            <person name="Fortin Y."/>
            <person name="Hudson T.J."/>
            <person name="Raymond V."/>
            <person name="Link B.A."/>
            <person name="Walter M.A."/>
        </authorList>
    </citation>
    <scope>FUNCTION</scope>
    <scope>DNA-BINDING</scope>
</reference>
<reference key="14">
    <citation type="journal article" date="2008" name="Invest. Ophthalmol. Vis. Sci.">
        <title>Human p32 is a novel FOXC1-interacting protein that regulates FOXC1 transcriptional activity in ocular cells.</title>
        <authorList>
            <person name="Huang L."/>
            <person name="Chi J."/>
            <person name="Berry F.B."/>
            <person name="Footz T.K."/>
            <person name="Sharp M.W."/>
            <person name="Walter M.A."/>
        </authorList>
    </citation>
    <scope>INTERACTION WITH C1QBP</scope>
</reference>
<reference key="15">
    <citation type="journal article" date="2008" name="Mol. Cell">
        <title>Kinase-selective enrichment enables quantitative phosphoproteomics of the kinome across the cell cycle.</title>
        <authorList>
            <person name="Daub H."/>
            <person name="Olsen J.V."/>
            <person name="Bairlein M."/>
            <person name="Gnad F."/>
            <person name="Oppermann F.S."/>
            <person name="Korner R."/>
            <person name="Greff Z."/>
            <person name="Keri G."/>
            <person name="Stemmann O."/>
            <person name="Mann M."/>
        </authorList>
    </citation>
    <scope>PHOSPHORYLATION [LARGE SCALE ANALYSIS] AT SER-235; SER-241 AND SER-320</scope>
    <scope>IDENTIFICATION BY MASS SPECTROMETRY [LARGE SCALE ANALYSIS]</scope>
    <source>
        <tissue>Cervix carcinoma</tissue>
    </source>
</reference>
<reference key="16">
    <citation type="journal article" date="2008" name="Proc. Natl. Acad. Sci. U.S.A.">
        <title>A quantitative atlas of mitotic phosphorylation.</title>
        <authorList>
            <person name="Dephoure N."/>
            <person name="Zhou C."/>
            <person name="Villen J."/>
            <person name="Beausoleil S.A."/>
            <person name="Bakalarski C.E."/>
            <person name="Elledge S.J."/>
            <person name="Gygi S.P."/>
        </authorList>
    </citation>
    <scope>PHOSPHORYLATION [LARGE SCALE ANALYSIS] AT SER-235</scope>
    <scope>IDENTIFICATION BY MASS SPECTROMETRY [LARGE SCALE ANALYSIS]</scope>
    <source>
        <tissue>Cervix carcinoma</tissue>
    </source>
</reference>
<reference key="17">
    <citation type="journal article" date="2009" name="Anal. Chem.">
        <title>Lys-N and trypsin cover complementary parts of the phosphoproteome in a refined SCX-based approach.</title>
        <authorList>
            <person name="Gauci S."/>
            <person name="Helbig A.O."/>
            <person name="Slijper M."/>
            <person name="Krijgsveld J."/>
            <person name="Heck A.J."/>
            <person name="Mohammed S."/>
        </authorList>
    </citation>
    <scope>IDENTIFICATION BY MASS SPECTROMETRY [LARGE SCALE ANALYSIS]</scope>
</reference>
<reference key="18">
    <citation type="journal article" date="2009" name="Sci. Signal.">
        <title>Quantitative phosphoproteomic analysis of T cell receptor signaling reveals system-wide modulation of protein-protein interactions.</title>
        <authorList>
            <person name="Mayya V."/>
            <person name="Lundgren D.H."/>
            <person name="Hwang S.-I."/>
            <person name="Rezaul K."/>
            <person name="Wu L."/>
            <person name="Eng J.K."/>
            <person name="Rodionov V."/>
            <person name="Han D.K."/>
        </authorList>
    </citation>
    <scope>IDENTIFICATION BY MASS SPECTROMETRY [LARGE SCALE ANALYSIS]</scope>
    <source>
        <tissue>Leukemic T-cell</tissue>
    </source>
</reference>
<reference key="19">
    <citation type="journal article" date="2010" name="Cancer Res.">
        <title>FOXC1 is a potential prognostic biomarker with functional significance in basal-like breast cancer.</title>
        <authorList>
            <person name="Ray P.S."/>
            <person name="Wang J."/>
            <person name="Qu Y."/>
            <person name="Sim M.S."/>
            <person name="Shamonki J."/>
            <person name="Bagaria S.P."/>
            <person name="Ye X."/>
            <person name="Liu B."/>
            <person name="Elashoff D."/>
            <person name="Hoon D.S."/>
            <person name="Walter M.A."/>
            <person name="Martens J.W."/>
            <person name="Richardson A.L."/>
            <person name="Giuliano A.E."/>
            <person name="Cui X."/>
        </authorList>
    </citation>
    <scope>FUNCTION</scope>
    <scope>SUBCELLULAR LOCATION</scope>
    <scope>TISSUE SPECIFICITY</scope>
</reference>
<reference key="20">
    <citation type="journal article" date="2010" name="Sci. Signal.">
        <title>Quantitative phosphoproteomics reveals widespread full phosphorylation site occupancy during mitosis.</title>
        <authorList>
            <person name="Olsen J.V."/>
            <person name="Vermeulen M."/>
            <person name="Santamaria A."/>
            <person name="Kumar C."/>
            <person name="Miller M.L."/>
            <person name="Jensen L.J."/>
            <person name="Gnad F."/>
            <person name="Cox J."/>
            <person name="Jensen T.S."/>
            <person name="Nigg E.A."/>
            <person name="Brunak S."/>
            <person name="Mann M."/>
        </authorList>
    </citation>
    <scope>PHOSPHORYLATION [LARGE SCALE ANALYSIS] AT SER-320 AND SER-521</scope>
    <scope>IDENTIFICATION BY MASS SPECTROMETRY [LARGE SCALE ANALYSIS]</scope>
    <source>
        <tissue>Cervix carcinoma</tissue>
    </source>
</reference>
<reference key="21">
    <citation type="journal article" date="2012" name="Int. J. Biol. Sci.">
        <title>FOXC1 contributes to microvascular invasion in primary hepatocellular carcinoma via regulating epithelial-mesenchymal transition.</title>
        <authorList>
            <person name="Xu Z.Y."/>
            <person name="Ding S.M."/>
            <person name="Zhou L."/>
            <person name="Xie H.Y."/>
            <person name="Chen K.J."/>
            <person name="Zhang W."/>
            <person name="Xing C.Y."/>
            <person name="Guo H.J."/>
            <person name="Zheng S.S."/>
        </authorList>
    </citation>
    <scope>FUNCTION</scope>
    <scope>TISSUE SPECIFICITY</scope>
</reference>
<reference key="22">
    <citation type="journal article" date="2012" name="J. Biol. Chem.">
        <title>Small ubiquitin-like modifier (SUMO) modification mediates function of the inhibitory domains of developmental regulators FOXC1 and FOXC2.</title>
        <authorList>
            <person name="Danciu T.E."/>
            <person name="Chupreta S."/>
            <person name="Cruz O."/>
            <person name="Fox J.E."/>
            <person name="Whitman M."/>
            <person name="Iniguez-Lluhi J.A."/>
        </authorList>
    </citation>
    <scope>SUMOYLATION</scope>
</reference>
<reference key="23">
    <citation type="journal article" date="2013" name="J. Proteome Res.">
        <title>Toward a comprehensive characterization of a human cancer cell phosphoproteome.</title>
        <authorList>
            <person name="Zhou H."/>
            <person name="Di Palma S."/>
            <person name="Preisinger C."/>
            <person name="Peng M."/>
            <person name="Polat A.N."/>
            <person name="Heck A.J."/>
            <person name="Mohammed S."/>
        </authorList>
    </citation>
    <scope>PHOSPHORYLATION [LARGE SCALE ANALYSIS] AT SER-320</scope>
    <scope>IDENTIFICATION BY MASS SPECTROMETRY [LARGE SCALE ANALYSIS]</scope>
    <source>
        <tissue>Cervix carcinoma</tissue>
    </source>
</reference>
<reference key="24">
    <citation type="journal article" date="2015" name="Cell Rep.">
        <title>FOXC1 activates smoothened-independent Hedgehog signaling in basal-like breast cancer.</title>
        <authorList>
            <person name="Han B."/>
            <person name="Qu Y."/>
            <person name="Jin Y."/>
            <person name="Yu Y."/>
            <person name="Deng N."/>
            <person name="Wawrowsky K."/>
            <person name="Zhang X."/>
            <person name="Li N."/>
            <person name="Bose S."/>
            <person name="Wang Q."/>
            <person name="Sakkiah S."/>
            <person name="Abrol R."/>
            <person name="Jensen T.W."/>
            <person name="Berman B.P."/>
            <person name="Tanaka H."/>
            <person name="Johnson J."/>
            <person name="Gao B."/>
            <person name="Hao J."/>
            <person name="Liu Z."/>
            <person name="Buttyan R."/>
            <person name="Ray P.S."/>
            <person name="Hung M.C."/>
            <person name="Giuliano A.E."/>
            <person name="Cui X."/>
        </authorList>
    </citation>
    <scope>FUNCTION</scope>
    <scope>INTERACTION WITH GLI2</scope>
    <scope>SUBCELLULAR LOCATION</scope>
    <scope>TISSUE SPECIFICITY</scope>
</reference>
<reference key="25">
    <citation type="journal article" date="2016" name="PLoS ONE">
        <title>Forkhead Box C1 regulates human primary keratinocyte terminal differentiation.</title>
        <authorList>
            <person name="Bin L."/>
            <person name="Deng L."/>
            <person name="Yang H."/>
            <person name="Zhu L."/>
            <person name="Wang X."/>
            <person name="Edwards M.G."/>
            <person name="Richers B."/>
            <person name="Leung D.Y."/>
        </authorList>
    </citation>
    <scope>FUNCTION</scope>
    <scope>INDUCTION</scope>
    <scope>TISSUE SPECIFICITY</scope>
</reference>
<reference key="26">
    <citation type="journal article" date="2001" name="Am. J. Hum. Genet.">
        <title>A spectrum of FOXC1 mutations suggests gene dosage as a mechanism for developmental defects of the anterior chamber of the eye.</title>
        <authorList>
            <person name="Nishimura D.Y."/>
            <person name="Searby C.C."/>
            <person name="Alward W.L."/>
            <person name="Walton D."/>
            <person name="Craig J.E."/>
            <person name="Mackey D.A."/>
            <person name="Kawase K."/>
            <person name="Kanis A.B."/>
            <person name="Patil S.R."/>
            <person name="Stone E.M."/>
            <person name="Sheffield V.C."/>
        </authorList>
    </citation>
    <scope>VARIANTS RIEG3 LEU-79 AND LEU-131</scope>
</reference>
<reference key="27">
    <citation type="journal article" date="2001" name="Am. J. Hum. Genet.">
        <title>Analyses of the effects that disease-causing missense mutations have and function of the winged-helix protein FOXC1.</title>
        <authorList>
            <person name="Saleem R.A."/>
            <person name="Banerjee-Basu S."/>
            <person name="Berry F.B."/>
            <person name="Baxevanis A.D."/>
            <person name="Walter M.A."/>
        </authorList>
    </citation>
    <scope>VARIANTS RIEG3 THR-82; MET-87; SER-112; MET-126 AND LEU-131</scope>
    <scope>CHARACTERIZATION OF VARIANTS RIEG3 THR-82; MET-87; SER-112; MET-126 AND LEU-131</scope>
</reference>
<reference key="28">
    <citation type="journal article" date="2001" name="Am. J. Ophthalmol.">
        <title>A novel (Pro79Thr) mutation in the FKHL7 gene in a Japanese family with Axenfeld-Rieger syndrome.</title>
        <authorList>
            <person name="Suzuki T."/>
            <person name="Takahashi K."/>
            <person name="Kuwahara S."/>
            <person name="Wada Y."/>
            <person name="Abe T."/>
            <person name="Tamai M."/>
        </authorList>
    </citation>
    <scope>VARIANT RIEG3 THR-79</scope>
</reference>
<reference key="29">
    <citation type="journal article" date="2001" name="J. Glaucoma">
        <title>Screening for mutations of Axenfeld-Rieger syndrome caused by FOXC1 gene in Japanese patients.</title>
        <authorList>
            <person name="Kawase C."/>
            <person name="Kawase K."/>
            <person name="Taniguchi T."/>
            <person name="Sugiyama K."/>
            <person name="Yamamoto T."/>
            <person name="Kitazawa Y."/>
            <person name="Alward W.L."/>
            <person name="Stone E.M."/>
            <person name="Nishimura D.Y."/>
            <person name="Sheffield V.C."/>
        </authorList>
    </citation>
    <scope>VARIANTS RIEG3 SER-91 AND HIS-127</scope>
</reference>
<reference key="30">
    <citation type="journal article" date="2002" name="Invest. Ophthalmol. Vis. Sci.">
        <title>Novel mutation in FOXC1 wing region causing Axenfeld-Rieger anomaly.</title>
        <authorList>
            <person name="Panicker S.G."/>
            <person name="Sampath S."/>
            <person name="Mandal A.K."/>
            <person name="Reddy A.B.M."/>
            <person name="Ahmed N."/>
            <person name="Hasnain S.E."/>
        </authorList>
    </citation>
    <scope>VARIANT RIEG3 LYS-161</scope>
</reference>
<reference key="31">
    <citation type="journal article" date="2003" name="Am. J. Ophthalmol.">
        <title>A family with Axenfeld-Rieger syndrome and Peters Anomaly caused by a point mutation (Phe112Ser) in the FOXC1 gene.</title>
        <authorList>
            <person name="Honkanen R.A."/>
            <person name="Nishimura D.Y."/>
            <person name="Swiderski R.E."/>
            <person name="Bennett S.R."/>
            <person name="Hong S."/>
            <person name="Kwon Y.H."/>
            <person name="Stone E.M."/>
            <person name="Sheffield V.C."/>
            <person name="Alward W.L.M."/>
        </authorList>
    </citation>
    <scope>VARIANT ASGD3 SER-112</scope>
</reference>
<reference key="32">
    <citation type="journal article" date="2003" name="Hum. Mol. Genet.">
        <title>Structural and functional analyses of disease-causing missense mutations in the forkhead domain of FOXC1.</title>
        <authorList>
            <person name="Saleem R.A."/>
            <person name="Banerjee-Basu S."/>
            <person name="Berry F.B."/>
            <person name="Baxevanis A.D."/>
            <person name="Walter M.A."/>
        </authorList>
    </citation>
    <scope>CHARACTERIZATION OF VARIANTS RIEG3 LEU-79; THR-79; THR-82; SER-91; THR-91; SER-112; MET-126; HIS-127 AND LEU-131</scope>
    <scope>FUNCTION</scope>
    <scope>DNA-BENDING</scope>
</reference>
<reference key="33">
    <citation type="journal article" date="2003" name="Invest. Ophthalmol. Vis. Sci.">
        <title>Identification and analysis of a novel mutation in the FOXC1 forkhead domain.</title>
        <authorList>
            <person name="Saleem R.A."/>
            <person name="Murphy T.C."/>
            <person name="Liebmann J.M."/>
            <person name="Walter M.A."/>
        </authorList>
    </citation>
    <scope>VARIANT RIEG3 PHE-86</scope>
    <scope>MUTAGENESIS OF LEU-86</scope>
    <scope>CHARACTERIZATION OF VARIANT RIEG3 PHE-86</scope>
    <scope>FUNCTION</scope>
    <scope>SUBCELLULAR LOCATION</scope>
</reference>
<reference key="34">
    <citation type="journal article" date="2004" name="Arch. Ophthalmol.">
        <title>Axenfeld-Rieger anomaly: a novel mutation in the forkhead box C1 (FOXC1) gene in a 4-generation family.</title>
        <authorList>
            <person name="Mortemousque B."/>
            <person name="Amati-Bonneau P."/>
            <person name="Couture F."/>
            <person name="Graffan R."/>
            <person name="Dubois S."/>
            <person name="Colin J."/>
            <person name="Bonneau D."/>
            <person name="Morissette J."/>
            <person name="Lacombe D."/>
            <person name="Raymond V."/>
        </authorList>
    </citation>
    <scope>VARIANT RIEG3 THR-91</scope>
</reference>
<reference key="35">
    <citation type="journal article" date="2004" name="Invest. Ophthalmol. Vis. Sci.">
        <title>The wing 2 region of the FOXC1 forkhead domain is necessary for normal DNA-binding and transactivation functions.</title>
        <authorList>
            <person name="Murphy T.C."/>
            <person name="Saleem R.A."/>
            <person name="Footz T."/>
            <person name="Ritch R."/>
            <person name="McGillivray B."/>
            <person name="Walter M.A."/>
        </authorList>
    </citation>
    <scope>VARIANTS RIEG3 ARG-165 AND PRO-169</scope>
    <scope>CHARACTERIZATION OF VARIANTS RIEG3 LYS-161; ARG-165 AND PRO-169</scope>
    <scope>FUNCTION</scope>
    <scope>SUBCELLULAR LOCATION</scope>
</reference>
<reference key="36">
    <citation type="journal article" date="2006" name="Hum. Mol. Genet.">
        <title>Functional interactions between FOXC1 and PITX2 underlie the sensitivity to FOXC1 gene dose in Axenfeld-Rieger syndrome and anterior segment dysgenesis.</title>
        <authorList>
            <person name="Berry F.B."/>
            <person name="Lines M.A."/>
            <person name="Oas J.M."/>
            <person name="Footz T."/>
            <person name="Underhill D.A."/>
            <person name="Gage P.J."/>
            <person name="Walter M.A."/>
        </authorList>
    </citation>
    <scope>CHARACTERIZATION OF VARIANTS RIEG3 HIS-127 AND LEU-131</scope>
    <scope>FUNCTION</scope>
    <scope>INTERACTION WITH PITX2</scope>
    <scope>SUBCELLULAR LOCATION</scope>
</reference>
<reference key="37">
    <citation type="journal article" date="2006" name="Invest. Ophthalmol. Vis. Sci.">
        <title>Novel mutations of FOXC1 and PITX2 in patients with Axenfeld-Rieger malformations.</title>
        <authorList>
            <person name="Weisschuh N."/>
            <person name="Dressler P."/>
            <person name="Schuettauf F."/>
            <person name="Wolf C."/>
            <person name="Wissinger B."/>
            <person name="Gramer E."/>
        </authorList>
    </citation>
    <scope>VARIANTS RIEG3 ARG-79; SER-115; ASP-149 AND VAL-161</scope>
</reference>
<reference key="38">
    <citation type="journal article" date="2006" name="Invest. Ophthalmol. Vis. Sci.">
        <authorList>
            <person name="Weisschuh N."/>
            <person name="Dressler P."/>
            <person name="Schuettauf F."/>
            <person name="Wolf C."/>
            <person name="Wissinger B."/>
            <person name="Gramer E."/>
        </authorList>
    </citation>
    <scope>ERRATUM OF PUBMED:16936096</scope>
</reference>
<reference key="39">
    <citation type="journal article" date="2007" name="Arch. Ophthalmol.">
        <title>Analyses of a novel L130F missense mutation in FOXC1.</title>
        <authorList>
            <person name="Ito Y.A."/>
            <person name="Footz T.K."/>
            <person name="Murphy T.C."/>
            <person name="Courtens W."/>
            <person name="Walter M.A."/>
        </authorList>
    </citation>
    <scope>VARIANT RIEG3 PHE-130</scope>
    <scope>CHARACTERIZATION OF VARIANT RIEG3 PHE-130</scope>
    <scope>FUNCTION</scope>
    <scope>SUBCELLULAR LOCATION</scope>
</reference>
<reference key="40">
    <citation type="journal article" date="2007" name="Mol. Vis.">
        <title>Novel mutations in the FOXC1 gene in Japanese patients with Axenfeld-Rieger syndrome.</title>
        <authorList>
            <person name="Fuse N."/>
            <person name="Takahashi K."/>
            <person name="Yokokura S."/>
            <person name="Nishida K."/>
        </authorList>
    </citation>
    <scope>VARIANT RIEG3 PRO-85</scope>
</reference>
<reference key="41">
    <citation type="journal article" date="2008" name="Ophthalmic Genet.">
        <title>Heterozygous FOXC1 mutation (M161K) associated with congenital glaucoma and aniridia in an infant and a milder phenotype in her mother.</title>
        <authorList>
            <person name="Khan A.O."/>
            <person name="Aldahmesh M.A."/>
            <person name="Al-Amri A."/>
        </authorList>
    </citation>
    <scope>VARIANT ASGD3 LYS-161</scope>
</reference>
<reference key="42">
    <citation type="journal article" date="2009" name="Clin. Genet.">
        <title>Characterization of a novel FOXC1 mutation, P297S, identified in two individuals with anterior segment dysgenesis.</title>
        <authorList>
            <person name="Fetterman C.D."/>
            <person name="Mirzayans F."/>
            <person name="Walter M.A."/>
        </authorList>
    </citation>
    <scope>VARIANT ASGD3 SER-297</scope>
    <scope>CHARACTERIZATION OF VARIANT ASGD3 SER-297</scope>
    <scope>FUNCTION</scope>
    <scope>SUBCELLULAR LOCATION</scope>
</reference>
<reference key="43">
    <citation type="journal article" date="2009" name="Invest. Ophthalmol. Vis. Sci.">
        <title>Severe molecular defects of a novel FOXC1 W152G mutation result in aniridia.</title>
        <authorList>
            <person name="Ito Y.A."/>
            <person name="Footz T.K."/>
            <person name="Berry F.B."/>
            <person name="Mirzayans F."/>
            <person name="Yu M."/>
            <person name="Khan A.O."/>
            <person name="Walter M.A."/>
        </authorList>
    </citation>
    <scope>VARIANT ASGD3 GLY-152</scope>
    <scope>CHARACTERIZATION OF VARIANT ASGD3 GLY-152</scope>
    <scope>FUNCTION</scope>
    <scope>SUBCELLULAR LOCATION</scope>
    <scope>PHOSPHORYLATION</scope>
    <scope>CHARACTERIZATION OF VARIANT RIEG3 PHE-130</scope>
</reference>
<reference key="44">
    <citation type="journal article" date="2011" name="Invest. Ophthalmol. Vis. Sci.">
        <title>Expanding the spectrum of FOXC1 and PITX2 mutations and copy number changes in patients with anterior segment malformations.</title>
        <authorList>
            <person name="D'haene B."/>
            <person name="Meire F."/>
            <person name="Claerhout I."/>
            <person name="Kroes H.Y."/>
            <person name="Plomp A."/>
            <person name="Arens Y.H."/>
            <person name="de Ravel T."/>
            <person name="Casteels I."/>
            <person name="De Jaegere S."/>
            <person name="Hooghe S."/>
            <person name="Wuyts W."/>
            <person name="van den Ende J."/>
            <person name="Roulez F."/>
            <person name="Veenstra-Knol H.E."/>
            <person name="Oldenburg R.A."/>
            <person name="Giltay J."/>
            <person name="Verheij J.B."/>
            <person name="de Faber J.T."/>
            <person name="Menten B."/>
            <person name="De Paepe A."/>
            <person name="Kestelyn P."/>
            <person name="Leroy B.P."/>
            <person name="De Baere E."/>
        </authorList>
    </citation>
    <scope>VARIANTS ASGD3 VAL-109; TRP-131 AND GLU-138</scope>
</reference>
<reference key="45">
    <citation type="journal article" date="2013" name="Am. J. Med. Genet. A">
        <title>Cardiac anomalies in Axenfeld-Rieger syndrome due to a novel FOXC1 mutation.</title>
        <authorList>
            <person name="Gripp K.W."/>
            <person name="Hopkins E."/>
            <person name="Jenny K."/>
            <person name="Thacker D."/>
            <person name="Salvin J."/>
        </authorList>
    </citation>
    <scope>VARIANT RIEG3 TRP-170</scope>
</reference>
<reference key="46">
    <citation type="journal article" date="2015" name="PLoS ONE">
        <title>Hypo- and hypermorphic FOXC1 mutations in dominant glaucoma: transactivation and phenotypic variability.</title>
        <authorList>
            <person name="Medina-Trillo C."/>
            <person name="Sanchez-Sanchez F."/>
            <person name="Aroca-Aguilar J.D."/>
            <person name="Ferre-Fernandez J.J."/>
            <person name="Morales L."/>
            <person name="Mendez-Hernandez C.D."/>
            <person name="Blanco-Kelly F."/>
            <person name="Ayuso C."/>
            <person name="Garcia-Feijoo J."/>
            <person name="Escribano J."/>
        </authorList>
    </citation>
    <scope>VARIANT RIEG3 SER-126</scope>
    <scope>CHARACTERIZATION OF VARIANT RIEG3 SER-126</scope>
    <scope>FUNCTION</scope>
    <scope>SUBCELLULAR LOCATION</scope>
    <scope>PHOSPHORYLATION</scope>
</reference>
<reference key="47">
    <citation type="journal article" date="2016" name="Ophthalmic Genet.">
        <title>A novel mutation of FOXC1 (R127L) in an Axenfeld-Rieger syndrome family with glaucoma and multiple congenital heart diseases.</title>
        <authorList>
            <person name="Du R.F."/>
            <person name="Huang H."/>
            <person name="Fan L.L."/>
            <person name="Li X.P."/>
            <person name="Xia K."/>
            <person name="Xiang R."/>
        </authorList>
    </citation>
    <scope>VARIANT RIEG3 LEU-127</scope>
</reference>
<reference key="48">
    <citation type="journal article" date="2017" name="Hum. Mutat.">
        <title>Comparison of bioinformatics prediction, molecular modeling, and functional analyses of FOXC1 mutations in patients with Axenfeld-Rieger syndrome.</title>
        <authorList>
            <person name="Seifi M."/>
            <person name="Footz T."/>
            <person name="Taylor S.A."/>
            <person name="Walter M.A."/>
        </authorList>
    </citation>
    <scope>VARIANTS RIEG3 ARG-128; TYR-135 AND VAL-161</scope>
    <scope>VARIANT ASN-368</scope>
    <scope>CHARACTERIZATION OF VARIANTS RIEG3 ARG-128; TYR-135 AND VAL-161</scope>
    <scope>CHARACTERIZATION OF VARIANT ASN-368</scope>
    <scope>FUNCTION</scope>
    <scope>SUBCELLULAR LOCATION</scope>
</reference>
<dbReference type="EMBL" id="AF048693">
    <property type="protein sequence ID" value="AAC18081.1"/>
    <property type="molecule type" value="Genomic_DNA"/>
</dbReference>
<dbReference type="EMBL" id="AF078096">
    <property type="protein sequence ID" value="AAC72915.1"/>
    <property type="molecule type" value="Genomic_DNA"/>
</dbReference>
<dbReference type="EMBL" id="AY228704">
    <property type="protein sequence ID" value="AAP15181.1"/>
    <property type="molecule type" value="Genomic_DNA"/>
</dbReference>
<dbReference type="EMBL" id="AL034344">
    <property type="status" value="NOT_ANNOTATED_CDS"/>
    <property type="molecule type" value="Genomic_DNA"/>
</dbReference>
<dbReference type="EMBL" id="L12143">
    <property type="protein sequence ID" value="AAK13575.1"/>
    <property type="molecule type" value="mRNA"/>
</dbReference>
<dbReference type="EMBL" id="U13221">
    <property type="protein sequence ID" value="AAA92038.1"/>
    <property type="molecule type" value="mRNA"/>
</dbReference>
<dbReference type="CCDS" id="CCDS4473.1"/>
<dbReference type="PIR" id="S51626">
    <property type="entry name" value="S51626"/>
</dbReference>
<dbReference type="RefSeq" id="NP_001444.2">
    <property type="nucleotide sequence ID" value="NM_001453.3"/>
</dbReference>
<dbReference type="SMR" id="Q12948"/>
<dbReference type="BioGRID" id="108585">
    <property type="interactions" value="231"/>
</dbReference>
<dbReference type="FunCoup" id="Q12948">
    <property type="interactions" value="1238"/>
</dbReference>
<dbReference type="IntAct" id="Q12948">
    <property type="interactions" value="83"/>
</dbReference>
<dbReference type="MINT" id="Q12948"/>
<dbReference type="STRING" id="9606.ENSP00000493906"/>
<dbReference type="GlyGen" id="Q12948">
    <property type="glycosylation" value="7 sites, 2 N-linked glycans (2 sites), 1 O-linked glycan (5 sites)"/>
</dbReference>
<dbReference type="iPTMnet" id="Q12948"/>
<dbReference type="PhosphoSitePlus" id="Q12948"/>
<dbReference type="SwissPalm" id="Q12948"/>
<dbReference type="BioMuta" id="FOXC1"/>
<dbReference type="DMDM" id="13638267"/>
<dbReference type="jPOST" id="Q12948"/>
<dbReference type="MassIVE" id="Q12948"/>
<dbReference type="PaxDb" id="9606-ENSP00000370256"/>
<dbReference type="PeptideAtlas" id="Q12948"/>
<dbReference type="ProteomicsDB" id="59043"/>
<dbReference type="Pumba" id="Q12948"/>
<dbReference type="Antibodypedia" id="9213">
    <property type="antibodies" value="403 antibodies from 40 providers"/>
</dbReference>
<dbReference type="DNASU" id="2296"/>
<dbReference type="Ensembl" id="ENST00000645831.2">
    <property type="protein sequence ID" value="ENSP00000493906.1"/>
    <property type="gene ID" value="ENSG00000054598.9"/>
</dbReference>
<dbReference type="GeneID" id="2296"/>
<dbReference type="KEGG" id="hsa:2296"/>
<dbReference type="MANE-Select" id="ENST00000645831.2">
    <property type="protein sequence ID" value="ENSP00000493906.1"/>
    <property type="RefSeq nucleotide sequence ID" value="NM_001453.3"/>
    <property type="RefSeq protein sequence ID" value="NP_001444.2"/>
</dbReference>
<dbReference type="AGR" id="HGNC:3800"/>
<dbReference type="CTD" id="2296"/>
<dbReference type="DisGeNET" id="2296"/>
<dbReference type="GeneCards" id="FOXC1"/>
<dbReference type="HGNC" id="HGNC:3800">
    <property type="gene designation" value="FOXC1"/>
</dbReference>
<dbReference type="HPA" id="ENSG00000054598">
    <property type="expression patterns" value="Tissue enriched (salivary)"/>
</dbReference>
<dbReference type="MalaCards" id="FOXC1"/>
<dbReference type="MIM" id="601090">
    <property type="type" value="gene"/>
</dbReference>
<dbReference type="MIM" id="601631">
    <property type="type" value="phenotype"/>
</dbReference>
<dbReference type="MIM" id="602482">
    <property type="type" value="phenotype"/>
</dbReference>
<dbReference type="neXtProt" id="NX_Q12948"/>
<dbReference type="OpenTargets" id="ENSG00000054598"/>
<dbReference type="Orphanet" id="98978">
    <property type="disease" value="Axenfeld anomaly"/>
</dbReference>
<dbReference type="Orphanet" id="782">
    <property type="disease" value="Axenfeld-Rieger syndrome"/>
</dbReference>
<dbReference type="Orphanet" id="250923">
    <property type="disease" value="Isolated aniridia"/>
</dbReference>
<dbReference type="Orphanet" id="708">
    <property type="disease" value="Peters anomaly"/>
</dbReference>
<dbReference type="Orphanet" id="91483">
    <property type="disease" value="Rieger anomaly"/>
</dbReference>
<dbReference type="PharmGKB" id="PA28217"/>
<dbReference type="VEuPathDB" id="HostDB:ENSG00000054598"/>
<dbReference type="eggNOG" id="KOG2294">
    <property type="taxonomic scope" value="Eukaryota"/>
</dbReference>
<dbReference type="GeneTree" id="ENSGT00940000162303"/>
<dbReference type="HOGENOM" id="CLU_035722_3_0_1"/>
<dbReference type="InParanoid" id="Q12948"/>
<dbReference type="OMA" id="TSWYLNQ"/>
<dbReference type="OrthoDB" id="5954824at2759"/>
<dbReference type="PAN-GO" id="Q12948">
    <property type="GO annotations" value="5 GO annotations based on evolutionary models"/>
</dbReference>
<dbReference type="PhylomeDB" id="Q12948"/>
<dbReference type="TreeFam" id="TF316127"/>
<dbReference type="PathwayCommons" id="Q12948"/>
<dbReference type="Reactome" id="R-HSA-9761174">
    <property type="pathway name" value="Formation of intermediate mesoderm"/>
</dbReference>
<dbReference type="Reactome" id="R-HSA-9830674">
    <property type="pathway name" value="Formation of the ureteric bud"/>
</dbReference>
<dbReference type="SignaLink" id="Q12948"/>
<dbReference type="SIGNOR" id="Q12948"/>
<dbReference type="BioGRID-ORCS" id="2296">
    <property type="hits" value="31 hits in 1171 CRISPR screens"/>
</dbReference>
<dbReference type="ChiTaRS" id="FOXC1">
    <property type="organism name" value="human"/>
</dbReference>
<dbReference type="GeneWiki" id="Forkhead_box_C1"/>
<dbReference type="GenomeRNAi" id="2296"/>
<dbReference type="Pharos" id="Q12948">
    <property type="development level" value="Tbio"/>
</dbReference>
<dbReference type="PRO" id="PR:Q12948"/>
<dbReference type="Proteomes" id="UP000005640">
    <property type="component" value="Chromosome 6"/>
</dbReference>
<dbReference type="RNAct" id="Q12948">
    <property type="molecule type" value="protein"/>
</dbReference>
<dbReference type="Bgee" id="ENSG00000054598">
    <property type="expression patterns" value="Expressed in parotid gland and 198 other cell types or tissues"/>
</dbReference>
<dbReference type="ExpressionAtlas" id="Q12948">
    <property type="expression patterns" value="baseline and differential"/>
</dbReference>
<dbReference type="GO" id="GO:0000785">
    <property type="term" value="C:chromatin"/>
    <property type="evidence" value="ECO:0000247"/>
    <property type="project" value="NTNU_SB"/>
</dbReference>
<dbReference type="GO" id="GO:0005829">
    <property type="term" value="C:cytosol"/>
    <property type="evidence" value="ECO:0000314"/>
    <property type="project" value="HPA"/>
</dbReference>
<dbReference type="GO" id="GO:0000792">
    <property type="term" value="C:heterochromatin"/>
    <property type="evidence" value="ECO:0000314"/>
    <property type="project" value="UniProtKB"/>
</dbReference>
<dbReference type="GO" id="GO:0005654">
    <property type="term" value="C:nucleoplasm"/>
    <property type="evidence" value="ECO:0000314"/>
    <property type="project" value="HPA"/>
</dbReference>
<dbReference type="GO" id="GO:0005634">
    <property type="term" value="C:nucleus"/>
    <property type="evidence" value="ECO:0000314"/>
    <property type="project" value="UniProtKB"/>
</dbReference>
<dbReference type="GO" id="GO:0003677">
    <property type="term" value="F:DNA binding"/>
    <property type="evidence" value="ECO:0000314"/>
    <property type="project" value="UniProtKB"/>
</dbReference>
<dbReference type="GO" id="GO:0008301">
    <property type="term" value="F:DNA binding, bending"/>
    <property type="evidence" value="ECO:0000314"/>
    <property type="project" value="UniProtKB"/>
</dbReference>
<dbReference type="GO" id="GO:0001228">
    <property type="term" value="F:DNA-binding transcription activator activity, RNA polymerase II-specific"/>
    <property type="evidence" value="ECO:0000314"/>
    <property type="project" value="NTNU_SB"/>
</dbReference>
<dbReference type="GO" id="GO:0003700">
    <property type="term" value="F:DNA-binding transcription factor activity"/>
    <property type="evidence" value="ECO:0000314"/>
    <property type="project" value="UniProtKB"/>
</dbReference>
<dbReference type="GO" id="GO:0000981">
    <property type="term" value="F:DNA-binding transcription factor activity, RNA polymerase II-specific"/>
    <property type="evidence" value="ECO:0000247"/>
    <property type="project" value="NTNU_SB"/>
</dbReference>
<dbReference type="GO" id="GO:0140297">
    <property type="term" value="F:DNA-binding transcription factor binding"/>
    <property type="evidence" value="ECO:0000353"/>
    <property type="project" value="UniProtKB"/>
</dbReference>
<dbReference type="GO" id="GO:1990841">
    <property type="term" value="F:promoter-specific chromatin binding"/>
    <property type="evidence" value="ECO:0000250"/>
    <property type="project" value="UniProtKB"/>
</dbReference>
<dbReference type="GO" id="GO:0000978">
    <property type="term" value="F:RNA polymerase II cis-regulatory region sequence-specific DNA binding"/>
    <property type="evidence" value="ECO:0000318"/>
    <property type="project" value="GO_Central"/>
</dbReference>
<dbReference type="GO" id="GO:0000977">
    <property type="term" value="F:RNA polymerase II transcription regulatory region sequence-specific DNA binding"/>
    <property type="evidence" value="ECO:0000314"/>
    <property type="project" value="NTNU_SB"/>
</dbReference>
<dbReference type="GO" id="GO:0061629">
    <property type="term" value="F:RNA polymerase II-specific DNA-binding transcription factor binding"/>
    <property type="evidence" value="ECO:0000353"/>
    <property type="project" value="UniProtKB"/>
</dbReference>
<dbReference type="GO" id="GO:0043565">
    <property type="term" value="F:sequence-specific DNA binding"/>
    <property type="evidence" value="ECO:0000314"/>
    <property type="project" value="UniProtKB"/>
</dbReference>
<dbReference type="GO" id="GO:0000976">
    <property type="term" value="F:transcription cis-regulatory region binding"/>
    <property type="evidence" value="ECO:0000314"/>
    <property type="project" value="UniProtKB"/>
</dbReference>
<dbReference type="GO" id="GO:0009653">
    <property type="term" value="P:anatomical structure morphogenesis"/>
    <property type="evidence" value="ECO:0000318"/>
    <property type="project" value="GO_Central"/>
</dbReference>
<dbReference type="GO" id="GO:0001525">
    <property type="term" value="P:angiogenesis"/>
    <property type="evidence" value="ECO:0007669"/>
    <property type="project" value="UniProtKB-KW"/>
</dbReference>
<dbReference type="GO" id="GO:0003275">
    <property type="term" value="P:apoptotic process involved in outflow tract morphogenesis"/>
    <property type="evidence" value="ECO:0007669"/>
    <property type="project" value="Ensembl"/>
</dbReference>
<dbReference type="GO" id="GO:0048844">
    <property type="term" value="P:artery morphogenesis"/>
    <property type="evidence" value="ECO:0007669"/>
    <property type="project" value="Ensembl"/>
</dbReference>
<dbReference type="GO" id="GO:0097746">
    <property type="term" value="P:blood vessel diameter maintenance"/>
    <property type="evidence" value="ECO:0007669"/>
    <property type="project" value="Ensembl"/>
</dbReference>
<dbReference type="GO" id="GO:0001974">
    <property type="term" value="P:blood vessel remodeling"/>
    <property type="evidence" value="ECO:0007669"/>
    <property type="project" value="Ensembl"/>
</dbReference>
<dbReference type="GO" id="GO:0043010">
    <property type="term" value="P:camera-type eye development"/>
    <property type="evidence" value="ECO:0007669"/>
    <property type="project" value="Ensembl"/>
</dbReference>
<dbReference type="GO" id="GO:0060038">
    <property type="term" value="P:cardiac muscle cell proliferation"/>
    <property type="evidence" value="ECO:0007669"/>
    <property type="project" value="Ensembl"/>
</dbReference>
<dbReference type="GO" id="GO:0030154">
    <property type="term" value="P:cell differentiation"/>
    <property type="evidence" value="ECO:0000318"/>
    <property type="project" value="GO_Central"/>
</dbReference>
<dbReference type="GO" id="GO:0016477">
    <property type="term" value="P:cell migration"/>
    <property type="evidence" value="ECO:0000314"/>
    <property type="project" value="UniProtKB"/>
</dbReference>
<dbReference type="GO" id="GO:0008283">
    <property type="term" value="P:cell population proliferation"/>
    <property type="evidence" value="ECO:0000314"/>
    <property type="project" value="UniProtKB"/>
</dbReference>
<dbReference type="GO" id="GO:1990869">
    <property type="term" value="P:cellular response to chemokine"/>
    <property type="evidence" value="ECO:0000250"/>
    <property type="project" value="UniProtKB"/>
</dbReference>
<dbReference type="GO" id="GO:0071364">
    <property type="term" value="P:cellular response to epidermal growth factor stimulus"/>
    <property type="evidence" value="ECO:0000315"/>
    <property type="project" value="UniProtKB"/>
</dbReference>
<dbReference type="GO" id="GO:0021549">
    <property type="term" value="P:cerebellum development"/>
    <property type="evidence" value="ECO:0000250"/>
    <property type="project" value="UniProtKB"/>
</dbReference>
<dbReference type="GO" id="GO:0070098">
    <property type="term" value="P:chemokine-mediated signaling pathway"/>
    <property type="evidence" value="ECO:0000250"/>
    <property type="project" value="UniProtKB"/>
</dbReference>
<dbReference type="GO" id="GO:0030199">
    <property type="term" value="P:collagen fibril organization"/>
    <property type="evidence" value="ECO:0007669"/>
    <property type="project" value="Ensembl"/>
</dbReference>
<dbReference type="GO" id="GO:0035050">
    <property type="term" value="P:embryonic heart tube development"/>
    <property type="evidence" value="ECO:0007669"/>
    <property type="project" value="Ensembl"/>
</dbReference>
<dbReference type="GO" id="GO:0001958">
    <property type="term" value="P:endochondral ossification"/>
    <property type="evidence" value="ECO:0000250"/>
    <property type="project" value="UniProtKB"/>
</dbReference>
<dbReference type="GO" id="GO:0001654">
    <property type="term" value="P:eye development"/>
    <property type="evidence" value="ECO:0000314"/>
    <property type="project" value="MGI"/>
</dbReference>
<dbReference type="GO" id="GO:0008354">
    <property type="term" value="P:germ cell migration"/>
    <property type="evidence" value="ECO:0007669"/>
    <property type="project" value="Ensembl"/>
</dbReference>
<dbReference type="GO" id="GO:0072010">
    <property type="term" value="P:glomerular epithelium development"/>
    <property type="evidence" value="ECO:0000250"/>
    <property type="project" value="UniProtKB"/>
</dbReference>
<dbReference type="GO" id="GO:0030203">
    <property type="term" value="P:glycosaminoglycan metabolic process"/>
    <property type="evidence" value="ECO:0007669"/>
    <property type="project" value="Ensembl"/>
</dbReference>
<dbReference type="GO" id="GO:0007507">
    <property type="term" value="P:heart development"/>
    <property type="evidence" value="ECO:0000314"/>
    <property type="project" value="MGI"/>
</dbReference>
<dbReference type="GO" id="GO:0001701">
    <property type="term" value="P:in utero embryonic development"/>
    <property type="evidence" value="ECO:0007669"/>
    <property type="project" value="Ensembl"/>
</dbReference>
<dbReference type="GO" id="GO:0001822">
    <property type="term" value="P:kidney development"/>
    <property type="evidence" value="ECO:0000250"/>
    <property type="project" value="UniProtKB"/>
</dbReference>
<dbReference type="GO" id="GO:0032808">
    <property type="term" value="P:lacrimal gland development"/>
    <property type="evidence" value="ECO:0007669"/>
    <property type="project" value="Ensembl"/>
</dbReference>
<dbReference type="GO" id="GO:0001945">
    <property type="term" value="P:lymph vessel development"/>
    <property type="evidence" value="ECO:0007669"/>
    <property type="project" value="Ensembl"/>
</dbReference>
<dbReference type="GO" id="GO:0036438">
    <property type="term" value="P:maintenance of lens transparency"/>
    <property type="evidence" value="ECO:0000250"/>
    <property type="project" value="UniProtKB"/>
</dbReference>
<dbReference type="GO" id="GO:0014031">
    <property type="term" value="P:mesenchymal cell development"/>
    <property type="evidence" value="ECO:0000250"/>
    <property type="project" value="UniProtKB"/>
</dbReference>
<dbReference type="GO" id="GO:0016525">
    <property type="term" value="P:negative regulation of angiogenesis"/>
    <property type="evidence" value="ECO:0000250"/>
    <property type="project" value="UniProtKB"/>
</dbReference>
<dbReference type="GO" id="GO:1902257">
    <property type="term" value="P:negative regulation of apoptotic process involved in outflow tract morphogenesis"/>
    <property type="evidence" value="ECO:0007669"/>
    <property type="project" value="Ensembl"/>
</dbReference>
<dbReference type="GO" id="GO:1901491">
    <property type="term" value="P:negative regulation of lymphangiogenesis"/>
    <property type="evidence" value="ECO:0000250"/>
    <property type="project" value="UniProtKB"/>
</dbReference>
<dbReference type="GO" id="GO:0045930">
    <property type="term" value="P:negative regulation of mitotic cell cycle"/>
    <property type="evidence" value="ECO:0000314"/>
    <property type="project" value="UniProtKB"/>
</dbReference>
<dbReference type="GO" id="GO:0000122">
    <property type="term" value="P:negative regulation of transcription by RNA polymerase II"/>
    <property type="evidence" value="ECO:0000250"/>
    <property type="project" value="UniProtKB"/>
</dbReference>
<dbReference type="GO" id="GO:0014032">
    <property type="term" value="P:neural crest cell development"/>
    <property type="evidence" value="ECO:0007669"/>
    <property type="project" value="Ensembl"/>
</dbReference>
<dbReference type="GO" id="GO:0007219">
    <property type="term" value="P:Notch signaling pathway"/>
    <property type="evidence" value="ECO:0007669"/>
    <property type="project" value="Ensembl"/>
</dbReference>
<dbReference type="GO" id="GO:0042475">
    <property type="term" value="P:odontogenesis of dentin-containing tooth"/>
    <property type="evidence" value="ECO:0000315"/>
    <property type="project" value="UniProtKB"/>
</dbReference>
<dbReference type="GO" id="GO:0001541">
    <property type="term" value="P:ovarian follicle development"/>
    <property type="evidence" value="ECO:0007669"/>
    <property type="project" value="Ensembl"/>
</dbReference>
<dbReference type="GO" id="GO:0048341">
    <property type="term" value="P:paraxial mesoderm formation"/>
    <property type="evidence" value="ECO:0007669"/>
    <property type="project" value="Ensembl"/>
</dbReference>
<dbReference type="GO" id="GO:1904798">
    <property type="term" value="P:positive regulation of core promoter binding"/>
    <property type="evidence" value="ECO:0000250"/>
    <property type="project" value="UniProtKB"/>
</dbReference>
<dbReference type="GO" id="GO:0043388">
    <property type="term" value="P:positive regulation of DNA binding"/>
    <property type="evidence" value="ECO:0000315"/>
    <property type="project" value="UniProtKB"/>
</dbReference>
<dbReference type="GO" id="GO:0045893">
    <property type="term" value="P:positive regulation of DNA-templated transcription"/>
    <property type="evidence" value="ECO:0000314"/>
    <property type="project" value="UniProtKB"/>
</dbReference>
<dbReference type="GO" id="GO:0010718">
    <property type="term" value="P:positive regulation of epithelial to mesenchymal transition"/>
    <property type="evidence" value="ECO:0000315"/>
    <property type="project" value="UniProtKB"/>
</dbReference>
<dbReference type="GO" id="GO:0010628">
    <property type="term" value="P:positive regulation of gene expression"/>
    <property type="evidence" value="ECO:0007669"/>
    <property type="project" value="Ensembl"/>
</dbReference>
<dbReference type="GO" id="GO:1901534">
    <property type="term" value="P:positive regulation of hematopoietic progenitor cell differentiation"/>
    <property type="evidence" value="ECO:0000250"/>
    <property type="project" value="UniProtKB"/>
</dbReference>
<dbReference type="GO" id="GO:1902038">
    <property type="term" value="P:positive regulation of hematopoietic stem cell differentiation"/>
    <property type="evidence" value="ECO:0000250"/>
    <property type="project" value="UniProtKB"/>
</dbReference>
<dbReference type="GO" id="GO:0045618">
    <property type="term" value="P:positive regulation of keratinocyte differentiation"/>
    <property type="evidence" value="ECO:0000315"/>
    <property type="project" value="UniProtKB"/>
</dbReference>
<dbReference type="GO" id="GO:0045944">
    <property type="term" value="P:positive regulation of transcription by RNA polymerase II"/>
    <property type="evidence" value="ECO:0000314"/>
    <property type="project" value="BHF-UCL"/>
</dbReference>
<dbReference type="GO" id="GO:0006355">
    <property type="term" value="P:regulation of DNA-templated transcription"/>
    <property type="evidence" value="ECO:0000314"/>
    <property type="project" value="UniProtKB"/>
</dbReference>
<dbReference type="GO" id="GO:0046620">
    <property type="term" value="P:regulation of organ growth"/>
    <property type="evidence" value="ECO:0007669"/>
    <property type="project" value="Ensembl"/>
</dbReference>
<dbReference type="GO" id="GO:0006357">
    <property type="term" value="P:regulation of transcription by RNA polymerase II"/>
    <property type="evidence" value="ECO:0000318"/>
    <property type="project" value="GO_Central"/>
</dbReference>
<dbReference type="GO" id="GO:0001756">
    <property type="term" value="P:somitogenesis"/>
    <property type="evidence" value="ECO:0007669"/>
    <property type="project" value="Ensembl"/>
</dbReference>
<dbReference type="GO" id="GO:0001657">
    <property type="term" value="P:ureteric bud development"/>
    <property type="evidence" value="ECO:0000250"/>
    <property type="project" value="UniProtKB"/>
</dbReference>
<dbReference type="GO" id="GO:0048010">
    <property type="term" value="P:vascular endothelial growth factor receptor signaling pathway"/>
    <property type="evidence" value="ECO:0007669"/>
    <property type="project" value="Ensembl"/>
</dbReference>
<dbReference type="GO" id="GO:0038084">
    <property type="term" value="P:vascular endothelial growth factor signaling pathway"/>
    <property type="evidence" value="ECO:0000250"/>
    <property type="project" value="UniProtKB"/>
</dbReference>
<dbReference type="GO" id="GO:0055010">
    <property type="term" value="P:ventricular cardiac muscle tissue morphogenesis"/>
    <property type="evidence" value="ECO:0007669"/>
    <property type="project" value="Ensembl"/>
</dbReference>
<dbReference type="CDD" id="cd20044">
    <property type="entry name" value="FH_FOXC1"/>
    <property type="match status" value="1"/>
</dbReference>
<dbReference type="FunFam" id="1.10.10.10:FF:000016">
    <property type="entry name" value="Forkhead box protein I1"/>
    <property type="match status" value="1"/>
</dbReference>
<dbReference type="Gene3D" id="1.10.10.10">
    <property type="entry name" value="Winged helix-like DNA-binding domain superfamily/Winged helix DNA-binding domain"/>
    <property type="match status" value="1"/>
</dbReference>
<dbReference type="InterPro" id="IPR001766">
    <property type="entry name" value="Fork_head_dom"/>
</dbReference>
<dbReference type="InterPro" id="IPR050211">
    <property type="entry name" value="FOX_domain-containing"/>
</dbReference>
<dbReference type="InterPro" id="IPR047391">
    <property type="entry name" value="FOXC1/C2-like_FH"/>
</dbReference>
<dbReference type="InterPro" id="IPR018122">
    <property type="entry name" value="TF_fork_head_CS_1"/>
</dbReference>
<dbReference type="InterPro" id="IPR030456">
    <property type="entry name" value="TF_fork_head_CS_2"/>
</dbReference>
<dbReference type="InterPro" id="IPR036388">
    <property type="entry name" value="WH-like_DNA-bd_sf"/>
</dbReference>
<dbReference type="InterPro" id="IPR036390">
    <property type="entry name" value="WH_DNA-bd_sf"/>
</dbReference>
<dbReference type="PANTHER" id="PTHR11829">
    <property type="entry name" value="FORKHEAD BOX PROTEIN"/>
    <property type="match status" value="1"/>
</dbReference>
<dbReference type="PANTHER" id="PTHR11829:SF68">
    <property type="entry name" value="FORKHEAD BOX PROTEIN C1"/>
    <property type="match status" value="1"/>
</dbReference>
<dbReference type="Pfam" id="PF00250">
    <property type="entry name" value="Forkhead"/>
    <property type="match status" value="1"/>
</dbReference>
<dbReference type="PRINTS" id="PR00053">
    <property type="entry name" value="FORKHEAD"/>
</dbReference>
<dbReference type="SMART" id="SM00339">
    <property type="entry name" value="FH"/>
    <property type="match status" value="1"/>
</dbReference>
<dbReference type="SUPFAM" id="SSF46785">
    <property type="entry name" value="Winged helix' DNA-binding domain"/>
    <property type="match status" value="1"/>
</dbReference>
<dbReference type="PROSITE" id="PS00657">
    <property type="entry name" value="FORK_HEAD_1"/>
    <property type="match status" value="1"/>
</dbReference>
<dbReference type="PROSITE" id="PS00658">
    <property type="entry name" value="FORK_HEAD_2"/>
    <property type="match status" value="1"/>
</dbReference>
<dbReference type="PROSITE" id="PS50039">
    <property type="entry name" value="FORK_HEAD_3"/>
    <property type="match status" value="1"/>
</dbReference>
<keyword id="KW-0010">Activator</keyword>
<keyword id="KW-0037">Angiogenesis</keyword>
<keyword id="KW-0209">Deafness</keyword>
<keyword id="KW-0217">Developmental protein</keyword>
<keyword id="KW-0225">Disease variant</keyword>
<keyword id="KW-0238">DNA-binding</keyword>
<keyword id="KW-0539">Nucleus</keyword>
<keyword id="KW-1059">Peters anomaly</keyword>
<keyword id="KW-0597">Phosphoprotein</keyword>
<keyword id="KW-1267">Proteomics identification</keyword>
<keyword id="KW-1185">Reference proteome</keyword>
<keyword id="KW-0678">Repressor</keyword>
<keyword id="KW-0804">Transcription</keyword>
<keyword id="KW-0805">Transcription regulation</keyword>
<keyword id="KW-0832">Ubl conjugation</keyword>
<comment type="function">
    <text evidence="1 8 9 11 14 15 16 17 19 20 21 23 25 28 29 30 33 36 37 38 39 40">DNA-binding transcriptional factor that plays a role in a broad range of cellular and developmental processes such as eye, bones, cardiovascular, kidney and skin development (PubMed:11782474, PubMed:14506133, PubMed:14578375, PubMed:15277473, PubMed:15299087, PubMed:15684392, PubMed:16449236, PubMed:16492674, PubMed:17210863, PubMed:19279310, PubMed:19793056, PubMed:25786029, PubMed:27804176, PubMed:27907090). Acts either as a transcriptional activator or repressor (PubMed:11782474). Binds to the consensus binding site 5'-[G/C][A/T]AAA[T/C]AA[A/C]-3' in promoter of target genes (PubMed:11782474, PubMed:12533514, PubMed:14506133, PubMed:19793056, PubMed:27804176, PubMed:7957066). Upon DNA-binding, promotes DNA bending (PubMed:14506133, PubMed:7957066). Acts as a transcriptional coactivator (PubMed:26565916). Stimulates Indian hedgehog (Ihh)-induced target gene expression mediated by the transcription factor GLI2, and hence regulates endochondral ossification (By similarity). Also acts as a transcriptional coregulator by increasing DNA-binding capacity of GLI2 in breast cancer cells (PubMed:26565916). Regulates FOXO1 through binding to a conserved element, 5'-GTAAACAAA-3' in its promoter region, implicating FOXC1 as an important regulator of cell viability and resistance to oxidative stress in the eye (PubMed:17993506). Cooperates with transcription factor FOXC2 in regulating expression of genes that maintain podocyte integrity (By similarity). Promotes cell growth inhibition by stopping the cell cycle in the G1 phase through TGFB1-mediated signals (PubMed:12408963). Involved in epithelial-mesenchymal transition (EMT) induction by increasing cell proliferation, migration and invasion (PubMed:20406990, PubMed:22991501). Involved in chemokine CXCL12-induced endothelial cell migration through the control of CXCR4 expression (By similarity). Plays a role in the gene regulatory network essential for epidermal keratinocyte terminal differentiation (PubMed:27907090). Essential developmental transcriptional factor required for mesoderm-derived tissues, such as the somites, skin, bone and cartilage. Positively regulates CXCL12 and stem cell factor expression in bone marrow mesenchymal progenitor cells, and hence plays a role in the development and maintenance of mesenchymal niches for haematopoietic stem and progenitor cells (HSPC). Plays a role in corneal transparency by preventing both blood vessel and lymphatic vessel growth during embryonic development in a VEGF-dependent manner. Involved in chemokine CXCL12-induced endothelial cell migration through the control of CXCR4 expression (By similarity). May function as a tumor suppressor (PubMed:12408963).</text>
</comment>
<comment type="subunit">
    <text evidence="19 20 27 37">Monomer. Interacts with C1QBP (PubMed:18676636). Interacts (via N-terminus) with GLI2 (via C-terminal internal region); this interaction is direct and increases GLI2 DNA-binding and transcriptional activity through a smoothened (SMO)-independent Hedgehog (Hh) signaling pathway (PubMed:26565916). Interacts (via C-terminus domain) with PITX2 isoform 3 (via homeobox domain) (PubMed:16449236). Interacts with FLNA and PBX1 (PubMed:15684392).</text>
</comment>
<comment type="interaction">
    <interactant intactId="EBI-1175253">
        <id>Q12948</id>
    </interactant>
    <interactant intactId="EBI-347528">
        <id>Q07021</id>
        <label>C1QBP</label>
    </interactant>
    <organismsDiffer>false</organismsDiffer>
    <experiments>6</experiments>
</comment>
<comment type="interaction">
    <interactant intactId="EBI-1175253">
        <id>Q12948</id>
    </interactant>
    <interactant intactId="EBI-350432">
        <id>P21333</id>
        <label>FLNA</label>
    </interactant>
    <organismsDiffer>false</organismsDiffer>
    <experiments>8</experiments>
</comment>
<comment type="interaction">
    <interactant intactId="EBI-1175253">
        <id>Q12948</id>
    </interactant>
    <interactant intactId="EBI-301611">
        <id>P40424</id>
        <label>PBX1</label>
    </interactant>
    <organismsDiffer>false</organismsDiffer>
    <experiments>5</experiments>
</comment>
<comment type="interaction">
    <interactant intactId="EBI-1175253">
        <id>Q12948</id>
    </interactant>
    <interactant intactId="EBI-1175243">
        <id>Q99697-3</id>
        <label>PITX2</label>
    </interactant>
    <organismsDiffer>false</organismsDiffer>
    <experiments>6</experiments>
</comment>
<comment type="interaction">
    <interactant intactId="EBI-1175253">
        <id>Q12948</id>
    </interactant>
    <interactant intactId="EBI-6248094">
        <id>Q9Q2G4</id>
        <label>ORF</label>
    </interactant>
    <organismsDiffer>true</organismsDiffer>
    <experiments>3</experiments>
</comment>
<comment type="subcellular location">
    <subcellularLocation>
        <location evidence="8 15 16 17 19 20 23 28 29 30 36 37 38">Nucleus</location>
    </subcellularLocation>
    <text evidence="1 19 20">Colocalizes with PITX2 isoform 3 in the nucleus at subnuclear chromatine regions (PubMed:16449236). Colocalizes with CBX5 to a heterochromatin-rich region of the nucleus (PubMed:15684392). Colocalizes with GLI2 in the nucleus (By similarity).</text>
</comment>
<comment type="tissue specificity">
    <text evidence="30 33 37 39 41">Expressed in keratinocytes of epidermis and hair follicle (PubMed:27907090). Expressed strongly in microvascular invasion (MVI) formation, basal-like breast cancer (BLBC) and hepatocellular tumors (PubMed:20406990, PubMed:22991501). Expressed in breast cancers (at protein level) (PubMed:26565916). Expressed in hematopoietic cells (PubMed:8499623).</text>
</comment>
<comment type="induction">
    <text evidence="9 39">Up-regulated during the progression of epidermal keratinocyte differentiation (at protein level) (PubMed:27907090). Up-regulated upon calcium-mediated keratinocyte differentiation (PubMed:27907090). Up-regulated by transforming growth factor TGFB1 (PubMed:12408963).</text>
</comment>
<comment type="PTM">
    <text evidence="8 21 28 36">Phosphorylated (PubMed:11782474, PubMed:19279310, PubMed:25786029). Phosphorylated on Ser-272 in response to epidermal growth factor (EGF) in a ERK1/2 MAPK-dependent signaling pathway; phosphorylation contributes to its protein stability and transcriptional activity (PubMed:16492674).</text>
</comment>
<comment type="PTM">
    <text evidence="32">Sumoylated preferentially with SUMO2 or SUMO3 (PubMed:22493429). Desumoylated by SENP2 (PubMed:22493429).</text>
</comment>
<comment type="PTM">
    <text evidence="21">Ubiquitinated, leading to its proteasomal degradation (PubMed:16492674).</text>
</comment>
<comment type="disease" evidence="4 5 6 7 10 12 14 15 16 18 20 22 23 24 28 34 35 36 38 43">
    <disease id="DI-01266">
        <name>Axenfeld-Rieger syndrome 3</name>
        <acronym>RIEG3</acronym>
        <description>An autosomal dominant disorder of morphogenesis that results in abnormal development of the anterior segment of the eye, and results in blindness from glaucoma in approximately 50% of affected individuals. Features include posterior corneal embryotoxon, prominent Schwalbe line and iris adhesion to the Schwalbe line, hypertelorism, hypodontia, sensorineural deafness, redundant periumbilical skin, and cardiovascular defects such as patent ductus arteriosus and atrial septal defect. When associated with tooth anomalies, the disorder is known as Rieger syndrome.</description>
        <dbReference type="MIM" id="602482"/>
    </disease>
    <text>The disease is caused by variants affecting the gene represented in this entry.</text>
</comment>
<comment type="disease" evidence="13 26 28 29 31 42">
    <disease id="DI-01832">
        <name>Anterior segment dysgenesis 3</name>
        <acronym>ASGD3</acronym>
        <description>A form of anterior segment dysgenesis, a group of defects affecting anterior structures of the eye including cornea, iris, lens, trabecular meshwork, and Schlemm canal. Anterior segment dysgeneses result from abnormal migration or differentiation of the neural crest derived mesenchymal cells that give rise to components of the anterior chamber during eye development. Different anterior segment anomalies may exist alone or in combination, including iris hypoplasia, enlarged or reduced corneal diameter, corneal vascularization and opacity, posterior embryotoxon, corectopia, polycoria, abnormal iridocorneal angle, ectopia lentis, and anterior synechiae between the iris and posterior corneal surface. Clinical conditions falling within the phenotypic spectrum of anterior segment dysgeneses include aniridia, Axenfeld anomaly, Reiger anomaly/syndrome, Peters anomaly, and iridogoniodysgenesis. ASGD3 inheritance is autosomal dominant.</description>
        <dbReference type="MIM" id="601631"/>
    </disease>
    <text>The disease is caused by variants affecting the gene represented in this entry.</text>
</comment>
<comment type="online information" name="Atlas of Genetics and Cytogenetics in Oncology and Haematology">
    <link uri="https://atlasgeneticsoncology.org/gene/40624/FOXC1"/>
</comment>
<organism>
    <name type="scientific">Homo sapiens</name>
    <name type="common">Human</name>
    <dbReference type="NCBI Taxonomy" id="9606"/>
    <lineage>
        <taxon>Eukaryota</taxon>
        <taxon>Metazoa</taxon>
        <taxon>Chordata</taxon>
        <taxon>Craniata</taxon>
        <taxon>Vertebrata</taxon>
        <taxon>Euteleostomi</taxon>
        <taxon>Mammalia</taxon>
        <taxon>Eutheria</taxon>
        <taxon>Euarchontoglires</taxon>
        <taxon>Primates</taxon>
        <taxon>Haplorrhini</taxon>
        <taxon>Catarrhini</taxon>
        <taxon>Hominidae</taxon>
        <taxon>Homo</taxon>
    </lineage>
</organism>
<sequence>MQARYSVSSPNSLGVVPYLGGEQSYYRAAAAAAGGGYTAMPAPMSVYSHPAHAEQYPGGMARAYGPYTPQPQPKDMVKPPYSYIALITMAIQNAPDKKITLNGIYQFIMDRFPFYRDNKQGWQNSIRHNLSLNECFVKVPRDDKKPGKGSYWTLDPDSYNMFENGSFLRRRRRFKKKDAVKDKEEKDRLHLKEPPPPGRQPPPAPPEQADGNAPGPQPPPVRIQDIKTENGTCPSPPQPLSPAAALGSGSAAAVPKIESPDSSSSSLSSGSSPPGSLPSARPLSLDGADSAPPPPAPSAPPPHHSQGFSVDNIMTSLRGSPQSAAAELSSGLLASAAASSRAGIAPPLALGAYSPGQSSLYSSPCSQTSSAGSSGGGGGGAGAAGGAGGAGTYHCNLQAMSLYAAGERGGHLQGAPGGAGGSAVDDPLPDYSLPPVTSSSSSSLSHGGGGGGGGGGQEAGHHPAAHQGRLTSWYLNQAGGDLGHLASAAAAAAAAGYPGQQQNFHSVREMFESQRIGLNNSPVNGNSSCQMAFPSSQSLYRTSGAFVYDCSKF</sequence>
<feature type="chain" id="PRO_0000091806" description="Forkhead box protein C1">
    <location>
        <begin position="1"/>
        <end position="553"/>
    </location>
</feature>
<feature type="DNA-binding region" description="Fork-head" evidence="2">
    <location>
        <begin position="77"/>
        <end position="168"/>
    </location>
</feature>
<feature type="region of interest" description="Required for transcriptional activation" evidence="8">
    <location>
        <begin position="1"/>
        <end position="51"/>
    </location>
</feature>
<feature type="region of interest" description="Disordered" evidence="3">
    <location>
        <begin position="173"/>
        <end position="310"/>
    </location>
</feature>
<feature type="region of interest" description="Required for transcriptional inhibition" evidence="8">
    <location>
        <begin position="215"/>
        <end position="366"/>
    </location>
</feature>
<feature type="region of interest" description="Disordered" evidence="3">
    <location>
        <begin position="356"/>
        <end position="387"/>
    </location>
</feature>
<feature type="region of interest" description="Disordered" evidence="3">
    <location>
        <begin position="414"/>
        <end position="465"/>
    </location>
</feature>
<feature type="region of interest" description="Required for transcriptional activation" evidence="8">
    <location>
        <begin position="466"/>
        <end position="553"/>
    </location>
</feature>
<feature type="short sequence motif" description="Nuclear localization signal 1 (NLS 1)" evidence="8">
    <location>
        <begin position="78"/>
        <end position="93"/>
    </location>
</feature>
<feature type="short sequence motif" description="Nuclear localization signal 2 (NLS 2)" evidence="8">
    <location>
        <begin position="168"/>
        <end position="176"/>
    </location>
</feature>
<feature type="compositionally biased region" description="Basic and acidic residues" evidence="3">
    <location>
        <begin position="177"/>
        <end position="193"/>
    </location>
</feature>
<feature type="compositionally biased region" description="Pro residues" evidence="3">
    <location>
        <begin position="194"/>
        <end position="206"/>
    </location>
</feature>
<feature type="compositionally biased region" description="Low complexity" evidence="3">
    <location>
        <begin position="241"/>
        <end position="253"/>
    </location>
</feature>
<feature type="compositionally biased region" description="Low complexity" evidence="3">
    <location>
        <begin position="260"/>
        <end position="285"/>
    </location>
</feature>
<feature type="compositionally biased region" description="Pro residues" evidence="3">
    <location>
        <begin position="291"/>
        <end position="303"/>
    </location>
</feature>
<feature type="compositionally biased region" description="Polar residues" evidence="3">
    <location>
        <begin position="356"/>
        <end position="368"/>
    </location>
</feature>
<feature type="compositionally biased region" description="Gly residues" evidence="3">
    <location>
        <begin position="373"/>
        <end position="387"/>
    </location>
</feature>
<feature type="compositionally biased region" description="Gly residues" evidence="3">
    <location>
        <begin position="446"/>
        <end position="458"/>
    </location>
</feature>
<feature type="modified residue" description="Phosphoserine" evidence="45 46">
    <location>
        <position position="235"/>
    </location>
</feature>
<feature type="modified residue" description="Phosphoserine" evidence="46">
    <location>
        <position position="241"/>
    </location>
</feature>
<feature type="modified residue" description="Phosphoserine" evidence="21">
    <location>
        <position position="272"/>
    </location>
</feature>
<feature type="modified residue" description="Phosphoserine" evidence="46 47 48">
    <location>
        <position position="320"/>
    </location>
</feature>
<feature type="modified residue" description="Phosphoserine" evidence="47">
    <location>
        <position position="521"/>
    </location>
</feature>
<feature type="sequence variant" id="VAR_058722" description="In RIEG3; decreased location at the nucleus; decreased transcription regulatory region DNA binding; decreased sequence-specific DNA binding transcription factor activity; no change on DNA bending activity." evidence="4 14">
    <original>P</original>
    <variation>L</variation>
    <location>
        <position position="79"/>
    </location>
</feature>
<feature type="sequence variant" id="VAR_058723" description="In RIEG3." evidence="22">
    <original>P</original>
    <variation>R</variation>
    <location>
        <position position="79"/>
    </location>
</feature>
<feature type="sequence variant" id="VAR_058724" description="In RIEG3; decreased location at the nucleus; decreased transcription regulatory region DNA binding; decreased sequence-specific DNA binding transcription factor activity; no change on DNA bending activity." evidence="6 14">
    <original>P</original>
    <variation>T</variation>
    <location>
        <position position="79"/>
    </location>
</feature>
<feature type="sequence variant" id="VAR_007944" description="In RIEG3; decreased location at the nucleus; decreased transcription regulatory region DNA binding; decreased sequence-specific DNA binding transcription factor activity; dbSNP:rs104893953." evidence="5 14 43">
    <original>S</original>
    <variation>T</variation>
    <location>
        <position position="82"/>
    </location>
</feature>
<feature type="sequence variant" id="VAR_078501" description="In RIEG3; uncertain significance." evidence="24">
    <original>A</original>
    <variation>P</variation>
    <location>
        <position position="85"/>
    </location>
</feature>
<feature type="sequence variant" id="VAR_058725" description="In RIEG3; no change in location at the nucleus; decreased transcription regulatory region DNA binding; decreased sequence-specific DNA binding transcription factor activity; dbSNP:rs886039568." evidence="15">
    <original>L</original>
    <variation>F</variation>
    <location>
        <position position="86"/>
    </location>
</feature>
<feature type="sequence variant" id="VAR_007945" description="In RIEG3; loss of protein stability; dbSNP:rs104893954." evidence="5 43">
    <original>I</original>
    <variation>M</variation>
    <location>
        <position position="87"/>
    </location>
</feature>
<feature type="sequence variant" id="VAR_058726" description="In RIEG3; decreased location at the nucleus; decreased transcription regulatory region DNA binding; decreased sequence-specific DNA binding transcription factor activity; no change on DNA bending activity." evidence="7 14">
    <original>I</original>
    <variation>S</variation>
    <location>
        <position position="91"/>
    </location>
</feature>
<feature type="sequence variant" id="VAR_058727" description="In RIEG3; decreased location at the nucleus; decreased transcription regulatory region DNA binding; decreased sequence-specific DNA binding transcription factor activity; no change on DNA bending activity." evidence="14 18">
    <original>I</original>
    <variation>T</variation>
    <location>
        <position position="91"/>
    </location>
</feature>
<feature type="sequence variant" id="VAR_078502" description="In ASGD3; dbSNP:rs917382067." evidence="31">
    <original>M</original>
    <variation>V</variation>
    <location>
        <position position="109"/>
    </location>
</feature>
<feature type="sequence variant" id="VAR_007815" description="In ASGD3 and RIEG3; decreased location at the nucleus; decreased transcription regulatory region DNA binding; decreased sequence-specific DNA binding transcription factor activity; dbSNP:rs104893951." evidence="5 13 14 42">
    <original>F</original>
    <variation>S</variation>
    <location>
        <position position="112"/>
    </location>
</feature>
<feature type="sequence variant" id="VAR_058728" description="In RIEG3." evidence="22">
    <original>Y</original>
    <variation>S</variation>
    <location>
        <position position="115"/>
    </location>
</feature>
<feature type="sequence variant" id="VAR_007816" description="In ASGD3 and RIEG3; with glaucoma; decreased location at the nucleus; decreased transcription regulatory region DNA binding; decreased sequence-specific DNA binding transcription factor activity; dbSNP:rs104893958." evidence="5 14 42">
    <original>I</original>
    <variation>M</variation>
    <location>
        <position position="126"/>
    </location>
</feature>
<feature type="sequence variant" id="VAR_078503" description="In RIEG3; hypomorphic mutation; decreased protein abundance; decreased protein stability; changed post-translational phosphorylation; decreased location at the nucleus; novel location at the cytoplasm; decreased transcription regulatory region DNA binding; decreased sequence-specific DNA binding transcription factor activity; dbSNP:rs483352810." evidence="36">
    <original>I</original>
    <variation>S</variation>
    <location>
        <position position="126"/>
    </location>
</feature>
<feature type="sequence variant" id="VAR_058729" description="In RIEG3; decreased location at the nucleus; decreased transcription regulatory region DNA binding; decreased sequence-specific DNA binding transcription factor activity; dbSNP:rs1085307884." evidence="7 14 20">
    <original>R</original>
    <variation>H</variation>
    <location>
        <position position="127"/>
    </location>
</feature>
<feature type="sequence variant" id="VAR_078504" description="In RIEG3; dbSNP:rs1085307884." evidence="35">
    <original>R</original>
    <variation>L</variation>
    <location>
        <position position="127"/>
    </location>
</feature>
<feature type="sequence variant" id="VAR_078505" description="In RIEG3; no effect on protein abundance; increased protein stability; decreased location at nucleus; loss of transcription regulatory region DNA binding; loss of sequence-specific DNA binding transcription factor activity." evidence="38">
    <original>H</original>
    <variation>R</variation>
    <location>
        <position position="128"/>
    </location>
</feature>
<feature type="sequence variant" id="VAR_058730" description="In RIEG3; no effect on protein abundance; changed post-translational phosphorylation; novel location at aggresome, aggregation correspond to microtubule-dependent inclusion bodies; decreased location at the nucleus; decreased transcription regulatory region DNA binding; decreased sequence-specific DNA binding transcription factor activity; dbSNP:rs121909338." evidence="23 28">
    <original>L</original>
    <variation>F</variation>
    <location>
        <position position="130"/>
    </location>
</feature>
<feature type="sequence variant" id="VAR_007817" description="In RIEG3 and ASGD3; with glaucoma; decreased location at the nucleus; decreased transcription regulatory region DNA binding; decreased sequence-specific DNA binding transcription factor activity; dbSNP:rs104893957." evidence="4 5 14 20 42">
    <original>S</original>
    <variation>L</variation>
    <location>
        <position position="131"/>
    </location>
</feature>
<feature type="sequence variant" id="VAR_078506" description="In ASGD3; dbSNP:rs104893957." evidence="31">
    <original>S</original>
    <variation>W</variation>
    <location>
        <position position="131"/>
    </location>
</feature>
<feature type="sequence variant" id="VAR_078507" description="In RIEG3; decreased protein abundance; decreased protein stability; decreased location at nucleus; loss of transcription regulatory region DNA binding; loss of sequence-specific DNA binding transcription factor activity." evidence="38">
    <original>C</original>
    <variation>Y</variation>
    <location>
        <position position="135"/>
    </location>
</feature>
<feature type="sequence variant" id="VAR_078508" description="In ASGD3." evidence="31">
    <original>K</original>
    <variation>E</variation>
    <location>
        <position position="138"/>
    </location>
</feature>
<feature type="sequence variant" id="VAR_058731" description="In RIEG3." evidence="22">
    <original>G</original>
    <variation>D</variation>
    <location>
        <position position="149"/>
    </location>
</feature>
<feature type="sequence variant" id="VAR_078509" description="In ASGD3; no change in protein abundance; changed post-translational phosphorylation; changed protein structure; decreased location at the nucleus; novel location at the cytoplasm; increased protein aggregation, aggregation do not correspond to microtubule-dependent inclusion bodies; loss of transcription regulatory region DNA binding; loss of sequence-specific DNA binding transcription factor activity." evidence="28">
    <original>W</original>
    <variation>G</variation>
    <location>
        <position position="152"/>
    </location>
</feature>
<feature type="sequence variant" id="VAR_018150" description="In RIEG3 and ASGD3; no change in location at the nucleus; decreased transcription regulatory region DNA binding; decreased sequence-specific DNA binding transcription factor activity." evidence="10 12 16 26">
    <original>M</original>
    <variation>K</variation>
    <location>
        <position position="161"/>
    </location>
</feature>
<feature type="sequence variant" id="VAR_058732" description="In RIEG3; no effect on protein abundance; no effect on protein stability; no effect on location at nucleus; no effect on transcription regulatory region DNA binding; decreased sequence-specific DNA binding transcription factor activity." evidence="22 38">
    <original>M</original>
    <variation>V</variation>
    <location>
        <position position="161"/>
    </location>
</feature>
<feature type="sequence variant" id="VAR_058733" description="In RIEG3; no change in location at the nucleus; no effect on transcription regulatory region DNA binding; decreased sequence-specific DNA binding transcription factor activity." evidence="16">
    <original>G</original>
    <variation>R</variation>
    <location>
        <position position="165"/>
    </location>
</feature>
<feature type="sequence variant" id="VAR_058734" description="In RIEG3; no change in location at the nucleus; decreased transcription regulatory region DNA binding; decreased sequence-specific DNA binding transcription factor activity." evidence="16">
    <original>R</original>
    <variation>P</variation>
    <location>
        <position position="169"/>
    </location>
</feature>
<feature type="sequence variant" id="VAR_078510" description="In RIEG3; uncertain significance; dbSNP:rs1581373890." evidence="34">
    <original>R</original>
    <variation>W</variation>
    <location>
        <position position="170"/>
    </location>
</feature>
<feature type="sequence variant" id="VAR_078511" description="In ASGD3; no effect on protein abundance; increased protein stability; no effect on nuclear location; no effect on transcription regulatory region DNA binding; decreased sequence-specific DNA binding transcription factor activity; dbSNP:rs79691946." evidence="29">
    <original>P</original>
    <variation>S</variation>
    <location>
        <position position="297"/>
    </location>
</feature>
<feature type="sequence variant" id="VAR_078512" description="No effect on protein abundance; no effect on protein stability; no effect on nuclear location; no effect on transcription regulatory region DNA binding; no effect on sequence-specific DNA binding transcription factor activity." evidence="38">
    <original>T</original>
    <variation>N</variation>
    <location>
        <position position="368"/>
    </location>
</feature>
<feature type="mutagenesis site" description="No effect on protein stability. No effect on transcriptional activity." evidence="21">
    <original>T</original>
    <variation>A</variation>
    <location>
        <position position="68"/>
    </location>
</feature>
<feature type="mutagenesis site" description="Decreased nuclear localization. No effect on DNA-binding activity. Decreased transcriptional activity." evidence="17">
    <original>P</original>
    <variation>A</variation>
    <location>
        <position position="79"/>
    </location>
</feature>
<feature type="mutagenesis site" description="Decreased nuclear localization. No effect on DNA-binding activity. Decreased transcriptional activity." evidence="17">
    <original>P</original>
    <variation>E</variation>
    <location>
        <position position="79"/>
    </location>
</feature>
<feature type="mutagenesis site" description="Decreased nuclear localization. No effect on DNA-binding activity. Decreased transcriptional activity." evidence="17">
    <original>P</original>
    <variation>K</variation>
    <location>
        <position position="79"/>
    </location>
</feature>
<feature type="mutagenesis site" description="Decreased nuclear localization. No effect on DNA-binding activity. Decreased transcriptional activity." evidence="17">
    <original>L</original>
    <variation>A</variation>
    <location>
        <position position="86"/>
    </location>
</feature>
<feature type="mutagenesis site" description="Decreased nuclear localization. No effect on DNA-binding activity. Decreased transcriptional activity." evidence="17">
    <original>L</original>
    <variation>E</variation>
    <location>
        <position position="86"/>
    </location>
</feature>
<feature type="mutagenesis site" description="Decreased nuclear localization. No effect on DNA-binding activity. Decreased transcriptional activity." evidence="17">
    <original>L</original>
    <variation>K</variation>
    <location>
        <position position="86"/>
    </location>
</feature>
<feature type="mutagenesis site" description="Severely disrupts the protein function." evidence="15">
    <original>L</original>
    <variation>P</variation>
    <location>
        <position position="86"/>
    </location>
</feature>
<feature type="mutagenesis site" description="Loss of protein stability." evidence="17">
    <original>I</original>
    <variation>A</variation>
    <variation>E</variation>
    <variation>K</variation>
    <location>
        <position position="87"/>
    </location>
</feature>
<feature type="mutagenesis site" description="Decreased nuclear localization. Decreased DNA-binding activity. Decreased transcriptional activity." evidence="17">
    <original>I</original>
    <variation>A</variation>
    <location>
        <position position="91"/>
    </location>
</feature>
<feature type="mutagenesis site" description="Decreased nuclear localization. No effect on DNA-binding activity. Decreased transcriptional activity." evidence="17">
    <original>I</original>
    <variation>E</variation>
    <location>
        <position position="91"/>
    </location>
</feature>
<feature type="mutagenesis site" description="Decreased nuclear localization. No effect on DNA-binding activity. Decreased transcriptional activity." evidence="17">
    <original>I</original>
    <variation>K</variation>
    <location>
        <position position="91"/>
    </location>
</feature>
<feature type="mutagenesis site" description="Decreased nuclear localization. Decreased DNA-binding activity. Decreased transcriptional activity." evidence="17">
    <original>I</original>
    <variation>A</variation>
    <location>
        <position position="126"/>
    </location>
</feature>
<feature type="mutagenesis site" description="Decreased nuclear localization. Decreased DNA-binding activity. Decreased transcriptional activity." evidence="17">
    <original>I</original>
    <variation>E</variation>
    <location>
        <position position="126"/>
    </location>
</feature>
<feature type="mutagenesis site" description="Decreased nuclear localization. Decreased DNA-binding activity. Decreased transcriptional activity." evidence="17">
    <original>I</original>
    <variation>K</variation>
    <location>
        <position position="126"/>
    </location>
</feature>
<feature type="mutagenesis site" description="Decreased nuclear localization. Decreased DNA-binding activity. Decreased transcriptional activity." evidence="17">
    <original>R</original>
    <variation>A</variation>
    <location>
        <position position="127"/>
    </location>
</feature>
<feature type="mutagenesis site" description="Decreased nuclear localization. Decreased DNA-binding activity. Decreased transcriptional activity." evidence="17">
    <original>R</original>
    <variation>E</variation>
    <location>
        <position position="127"/>
    </location>
</feature>
<feature type="mutagenesis site" description="Decreased nuclear localization. Decreased DNA-binding activity. Decreased transcriptional activity." evidence="17">
    <original>R</original>
    <variation>K</variation>
    <location>
        <position position="127"/>
    </location>
</feature>
<feature type="mutagenesis site" description="Decreased protein stability. No effect on transcriptional activity." evidence="21">
    <original>S</original>
    <variation>A</variation>
    <location>
        <position position="241"/>
    </location>
</feature>
<feature type="mutagenesis site" description="No effect on protein stability. No effect on transcriptional activity." evidence="21">
    <original>S</original>
    <variation>A</variation>
    <location>
        <position position="259"/>
    </location>
</feature>
<feature type="mutagenesis site" description="Decreased protein stability. Decreased transcriptional activity." evidence="21">
    <original>S</original>
    <variation>A</variation>
    <location>
        <position position="272"/>
    </location>
</feature>
<feature type="sequence conflict" description="In Ref. 5; AAK13575." evidence="44" ref="5">
    <original>QPQPKDMV</original>
    <variation>RSRSPRHG</variation>
    <location>
        <begin position="70"/>
        <end position="77"/>
    </location>
</feature>
<feature type="sequence conflict" description="In Ref. 5; AAK13575." evidence="44" ref="5">
    <original>L</original>
    <variation>Q</variation>
    <location>
        <position position="101"/>
    </location>
</feature>
<feature type="sequence conflict" description="In Ref. 2; AAC72915." evidence="44" ref="2">
    <original>V</original>
    <variation>L</variation>
    <location>
        <position position="180"/>
    </location>
</feature>
<feature type="sequence conflict" description="In Ref. 2; AAC72915." evidence="44" ref="2">
    <original>RQPP</original>
    <variation>ASPR</variation>
    <location>
        <begin position="199"/>
        <end position="202"/>
    </location>
</feature>
<feature type="sequence conflict" description="In Ref. 1; AAC18081 and 3; AAP15181." evidence="44" ref="1 3">
    <original>D</original>
    <variation>N</variation>
    <location>
        <position position="426"/>
    </location>
</feature>
<name>FOXC1_HUMAN</name>
<protein>
    <recommendedName>
        <fullName>Forkhead box protein C1</fullName>
    </recommendedName>
    <alternativeName>
        <fullName>Forkhead-related protein FKHL7</fullName>
    </alternativeName>
    <alternativeName>
        <fullName>Forkhead-related transcription factor 3</fullName>
        <shortName>FREAC-3</shortName>
    </alternativeName>
</protein>
<accession>Q12948</accession>
<accession>Q86UP7</accession>
<accession>Q9BYM1</accession>
<accession>Q9NUE5</accession>
<accession>Q9UDD0</accession>
<accession>Q9UP06</accession>